<sequence length="7094" mass="797392">MSKINKYGLELHWAPEFPWMFEDAEEKLDNPSSSEVDIVCSTTAQKLETGGICPENHVMVDCRRLLKQECCVQSSLIREIVMNTRPYDLEVLLQDALQSREAVLVTPPLGMSLEACYVRGCNPNGWTMGLFRRRSVCNTGRCAVNKHVAYQLYMIDPAGVCFGAGQFVGWVIPLAFMPVQSRKFIVPWVMYLRKCGEKGAYNKDHKRGGFEHVYNFKVEDAYDLVHDEPKGKFSKKAYALIRGYRGVKPLLYVDQYGCDYTGGLADGLEAYADKTLQEMKALFPIWSQELPFDVTVAWHVVRDPRYVMRLQSASTIRSVAYVANPTEDLCDGSVVIKEPVHVYADDSIILRQHNLVDIMSCFYMEADAVVNAFYGVDLKDCGFVMQFGYIDCEQDLCDFKGWVPGNMIDGFACTTCGHVYETGDLLAQSSGVLPVNPVLHTKSAAGYGGFGCKDSFTLYGQTVVYFGGCVYWSPARNIWIPILKSSVKSYDGLVYTGVVGCKAIVKETNLICKALYLDYVQHKCGNLHQRELLGVSDVWHKQLLLNRGVYKPLLENIDYFNMRRAKFSLETFTVCADGFMPFLLDDLVPRAYYLAVSGQAFCDYAGKICHAVVSKSKELLDVSLDSLGAAIHYLNSKIVDLAQHFSDFGTSFVSKIVHFFKTFTTSTALAFAWVLFHVLHGAYIVVESDIYFVKNIPRYASAVAQAFRSVAKVVLDSLRVTFIDGLSCFKIGRRRICLSGSKIYEVERGLLHSSQLPLDVYDLTMPSQVQKTKQKPIYLKGSGSDFSLADSVVEVVTTSLTPCGYSEPPKVADKICIVDNVYMAKAGDKYYPVVVDGHVGLLDQAWRVPCAGRCVTFKEQPTVNEIASTPKTIKVFYELDKDFNTILNTACGVFEVDDTVDMEEFYAVVIDAIEEKLSPCKELEGVGAKVSAFLQKLEDNSLFLFDEAGEEVLAPKLYCAFTAPEDDDFLEESGVEEDDVEGEETDLTVTSAGEPCVASEQEESSEILEDTLDDGPCVETSDSQVEEDVQMSDFVDLESVIQDYENVCFEFYTTEPEFVKVLDLYVPKATRNNCWLRSVLAVMQKLPCQFKDKNLQDLWVLYKQQYSQLFVDTLVNKIPANIVVPQGGYVADFAYWFLTLCDWQCVAYWKCIKCDLALKLKGLDAMFFYGDVVSHVCKCGESMVLIDVDVPFTAHFALKDKLFCAFITKRSVYKAACVVDVNDSHSMAVVDGKQIDDHRITSITSDKFDFIIGHGMSFSMTTFEIAQLYGSCITPNVCFVKGDIIKVSKRVKAEVVVNPANGHMAHGGGVAKAIAVAAGQQFVKETTDMVKSKGVCATGDCYVSTGGKLCKTVLNVVGPDARTQGKQSYALLERVYKHLNKYDCVVTTLISAGIFSVPSDVSLTYLLGTAKKQVVLVSNNQEDFDLISKCQITAVEGTKKLAERLSFNVGRSIVYETDANKLILSNDVAFVSTFNVLQDVLSLRHDIALDDDARTFVQSNVDVVPEGWRVVNKFYQINGVRTVKYFECPGGIDICSQDKVFGYVQQGSFNKATVAQIKALFLDKVDILLTVDGVNFTNRFVPVGESFGKSLGNVFCDGVNVTKHKCDINYKGKVFFQFDNLSSEDLKAVRSSFNFDQKELLAYYNMLVNCSKWQVVFNGKYFTFKQANNNCFVNVSCLMLQSLNLKFKIVQWQEAWLEFRSGRPARFVSLVLAKGGFKFGDPADSRDFLRVVFSQVDLTGAICDFEIACKCGVKQEQRTGVDAVMHFGTLSREDLEIGYTVDCSCGKKLIHCVRFDVPFLICSNTPASVKLPKGVGSANIFKGDKVGHYVHVKCEQSYQLYDASNVKKVTDVTGNLSDCLYLKNLKQTFKSVLTTYYLDDVKKIEYKPDLSQYYCDGGKYYTQRIIKAQFKTFEKVDGVYTNFKLIGHTVCDILNAKLGFDSSKEFVEYKVTEWPTATGDVVLATDDLYVKRYERGCITFGKPVIWLSHEQASLNSLTYFNRPLLVDENKFDVLKVDDVDDGGDISESDAKEPKEINIIKLSGVKKPFKVEDSVIVNDDTSEIKYVKSLSIVDVYDMWLTGCRCVVRTANALSRAVNVPTIRKFIKFGMTLVSIPIDLLNLREIKPVFNVVKAVRNKISACFNFIKWLFVLLFGWIKISADNKVIYTTEVASKLTCKLVALAFKNAFLTFKWSVVARGACIIATIFLLWFNFIYANVIFSDFYLPKIGFLPTFVGKIAQWIKNTFSLVTICDLYSIQDVGFKNQYCNGSIACQFCLAGFDMLDNYKAIDVVQYEADRRAFVDYTGVLKIVIELIVSYALYTAWFYPLFALISIQILTTWLPELFMLSTLHWSVRLLVSLANMLPAHVFMRFYIIIASFIKLFSLFRHVAYGCSKSGCLFCYKRNRSLRVKCSTIVGGMIRYYDAMANGGTGFCSKHQWNCIDCDSYKPGNTFITVEAALDLSKELKRPIQPTDVAYHTVTDVKQVGCYMRLFYDRDGQRTYDDVNASLFVDYSNLLHSKVKSVPNMHVVVVENDADKANFLNAAVFYAQSLFRPILMVDKNLITTANTGTSVTETMFDVYVDTFLSMFDVDKKSLNALIATAHSSIKQGTQICKVLDTFLSCARKSCSIDSDVDTKCLADSVMSAVSAGLELTDESCNNLVPTYLKGDNIVAADLGVLIQNSAKHVQGNVAKIAGVSCIWSVDAFNQLSSDFQHKLKKACCKTGLKLKLTYNKQMANVSVLTTPFSLKGGAVFSYFVYVCFVLSLVCFIGLWCLMPTYTVHKSDFQLPVYASYKVLDNGVIRDVSVEDVCFANKFEQFDQWYESTFGLSYYSNSMACPIVVAVVDQDFGSTVFNVPTKVLRYGYHVLHFITHALSADGVQCYTPHSQISYSNFYASGCVLSSACTMFAMADGSPQPYCYTDGLMQNASLYSSLVPHVRYNLANAKGFIRFPEVLREGLVRIVRTRSMPYCRVGLCEEADEGICFNFNGSWVLNNDYYRSLPGTFCGRDVFDLIYQLFKGLAQPVDFLALTASSIAGAILAVIVVLVFYYLIKLKRAFGDYTSIVFVNVIVWCVNFMMLFVFQVYPTLSCVYAICYFYATLYFPSEISVIMHLQWLVMYGTIMPLWFCLLYISVVVSNHAFWVFSYCRQLGTSVRSDGTFEEMALTTFMITKDSYCKLKNSLSDVAFNRYLSLYNKYRYYSGKMDTAAYREAACSQLAKAMDTFTNNNGSDVLYQPPTASVSTSFLQSGIVKMVNPTSKVEPCIVSVTYGNMTLNGLWLGDKVYCPRHVICSASDMTNPDYTNLLCRVTSSDFTVLFDRLSLTVMSYQMQGCMLVLTVTLQNSRTPKYTFGVVKPGETFTVLAAYNGKPQGAFHVTMRSSYTIKGSFLCGSCGSVVYVIMGDCVKFVYMHQLELSTGCHTGTDFNGDFYGPYKDAQVVQLPVQDYIQSVNFVAWLYAAILNNCNWFVQSDKCSVEDFNVWALSNGFSQVKSDLVIDALASMTGVSLETLLAAIKHLKNGFQGRQIMGSCSFEDELTPSDVYQQLAGIKLQSKRTRLVKGIVCWIMASTFLFSCIITAFVKWTMFMYVTTNMLSITFCALCVISLTMLLVKHKHLYLTMYIIPVLFTLLYNNYLVVYKQTFRGYVYAWLSYYVPSVEYTYTDEVIYGMLLLIGMVFVTLRSINQYLFSFIMFVGRVISVVSLWYMGSNLEEEILLMLASLFGTYTWTTALSMAAAKVIAKWVAVNVLYFTDIPQIKIVLVCYLFIGYIISCYWGLFSLMNSLFRMPLGVYNYKISVQELRYMNANGLRPPKNSFEALMLNFKLLGIGGVPIIEVSQFQSKLTDVKCANVVLLNCLQHLHVASNSKLWQYCSTLHNEILATSDLGVAFEKLAQLLIVLFANPAAVDSKCLTSIEEVCDDYAKDNTVLQALQSEFVNMASFVEYEVAKKNLDEACSSGSANQQQLKQLEKACNIAKSAYERDRAVARKLERMADLALTNMYKEARINDKKSKVVSALQTMLFSMVRKLDNQALNSILDNAVKGCVPLNAIPSLAANTLTIIVPDKSVYDQVVDNVYVTYAGNVWQIQTIQDSDGTNKQLHEISDDCNWPLVIIANRHNEVSATALQNNELMPAKLKTQVVNSGPDQTCNTPTQCYYNNSYNGKIVYAILSDVDGLKYTKILKDDGNFVVLELDPPCKFTVQDVKGLKIKYLYFVKGCNTLARGWVVGTISSTVRLQAGTATEYASNSSILSLCAFSVDPKKTYLDFIQQGGTPIANCVKMLCDHAGTGMAITVKPDATTSQDSYGGASVCIYCRARVEHPDVDGLCKLRGKFVQVPVGIKDPVSYVLTHDVCQVCGFWRDGSCSCVSTDTTVQSKDTNFLNRVRGTSVDARLVPCASGLSTDVQLRAFDICNASVAGIGLHLKVNCCRFQRVDENGDKLDQFFVVKRTDLTIYNREMECYERVKDCKFVAEHDFFTFDVEGSRVPHIVRKDLTKYTMLDLCYALRHFDRNDCMLLCDILSIYAGCEQSYFTKKDWYDFVENPDIINVYKKLGPIFNRALVSATEFADKLVEVGLVGILTLDNQDLNGKWYDFGDYVIAAPGCGVAIADSYYSYMMPMLTMCHALDCELYVNNAYRLFDLVQYDFTDYKLELFNKYFKHWSMPYHPNTVDCQDDRCIIRCANFNILFSMVLPNTCFGPLVRQIFVDGVPFVVSIGYHYKELGIVMNMDVDTHRYRLSLKDLLLYAADPALHVASASALYDLRTCCFSVAAITSGVKFQTVKPGNFNQDFYDFILSKGLLKEGSSVDLKHFFFTQDGNAAITDYNYYKYNLPTMVDIKQLLFVLEVVYKYFEIYDGGCIPASQVIVNNYDKSAGYPFNKFGKARLYYEALSFEEQDEIYAYTKRNVLPTLTQMNLKYAISAKNRARTVAGVSILSTMTGRMFHQKCLKSIAATRGVPVVIGTTKFYGGWDDMLRRLIKDVDNPVLMGWDYPKCDRAMPNILRIVSSLVLARKHEACCSQSDRFYRLANEYAQVLSEIVMCGGCYYVKPGGTSSGDATTAFANSVFNICQAVSANVCALMSCNGNKIEDLSIRALQKRLYSHVYRSDMVDSTFVTEYYEFLNKHFSMMILSDDGVVCYNSDYASKGYIANISAFQQVLYYQNNVFMSESKCWVENDINNGPHEFCSQHTMLVKMDGDDVYLPYPDPSRILGAGCFVDDLLKTDSVLLIERFVSLAIDAYPLVYHENEEYQKVFRVYLEYIKKLYNELGNQILDSYSVILSTCDGQKFTDESFYKNMYLRSAVMQSVGACVVCSSQTSLRCGSCIRKPLLCCKCCYDHVMATDHKYVLSVSPYVCNAPGCDVNDVTKLYLGGMSYYCEDHKPQYSFKLVMNGMVFGLYKQSCTGSPYIDDFNRIASCKWTDVDDYILANECTERLKLFAAETQKATEEAFKQSYASATIQEIVSERELILSWEIGKVKPPLNKNYVFTGYHFTKNGKTVLGEYVFDKSELTNGVYYRATTTYKLSVGDVFVLTSHSVANLSAPTLVPQENYSSIRFASVYSVLETFQNNVVNYQHIGMKRYCTVQGPPGTGKSHLAIGLAVYYCTARVVYTAASHAAVDALCEKAYKFLNINDCTRIVPAKVRVECYDKFKINDTTRKYVFTTINALPEMVTDIVVVDEVSMLTNYELSVINARIRAKHYVYIGDPAQLPAPRVLLSKGTLEPKYFNTVTKLMCCLGPDIFLGTCYRCPKEIVDTVSALVYENKLKAKNESSSLCFKVYYKGVTTHESSSAVNMQQIYLINKFLKANPLWHKAVFISPYNSQNFAARRVLGLQTQTVDSAQGSEYDYVIYSQTAETAHSVNVNRFNVAITRAKKGILCVMSNMQLFEALQFTTLTVDKVPQAVETRVQCSTNLFKDCSKSYSGYHPAHAPSFLAVDDKYKATGDLAVCLGIGDSAVTYSRLTSLMGFKLDVTLDGYCKLFITKEEAVKRVRAWVGFDAEGAHATRDSIGTNFPLQLGFSTGIDFVVEATGLFADRDGYSFKKAVAKAPPGEQFKHLIPLMTRGQRWDVVRPRIVQMFADHLIDLSDCVVLVTWAANFELTCLRYFAKVGREISCNVCTKRATAYNSRTGYYGCWRHSVTCDYLYNPLIVDIQQWGYIGSLSSNHDLYCSVHKGAHVASSDAIMTRCLAVYDCFCNNINWNVEYPIISNELSINTSCRVLQRVMLKAAMLCNRYTLCYDIGNPKAIACVKDFDFKFYDAQPIVKSVKTLLYFFEAHKDSFKDGLCMFWNCNVDKYPPNAVVCRFDTRVLNNLNLPGCNGGSLYVNKHAFHTKPFSRAAFEHLKPMPFFYYSDTPCVYMDGMDAKQVDYVPLKSATCITRCNLVGAVCLKHAEEYREYLNSYNTATTAGFTFWVYKTFDFYNLWNTFTKLQSLENVVYNLVKTGHYTGQAGEMPCAIINDKVVAKIDKEDVVIFINNTTYPTNVAVELFAKRSIRHHPELKLFRNLNIDVCWKHVIWDYARESIFCSNTYGVCMYTDLKFIDKLNVLFDGRDNGALEAFKRSNNGVYISTTKVKSLSMIRGPPRAELNGVVVDKVGDTDCVFYFAVRKEGQDVIFSQFDSLRVSSNQSPQGNLGSNEPGNVGGNDALATSTIFTQSRVISSFTCRTDMEKDFIALDQDVFIQKYGLEDYAFEHIVYGNFNQKIIGGLHLLIGLYRRQQTSNLVIQEFVSYDSSIHSYFITDEKSGGSKSVCTVIDILLDDFVALVKSLNLNCVSKVVNVNVDFKDFQFMLWCNDEKVMTFYLRLQAASDWKPGYSMPVLYKYLNSPMERVSLWNYGKPVTLPTGCMMNVAKYTQLCQYLNTTTLAVPVNMRVLHLGAGSEKGVAPGSAVLRQWLPAGTILVDNDLYPFVSDSVATYFGDCITLPFDCQWDLIISDMYDPITKNIGEYNVSKDGFFTYICHMIRDKLALGGSVAIKITEFSWNAELYKLMGYFAFWTVFCTNANASSSEGFLIGINYLGKPKVEIDGNVMHANYLFWRNSTVWNGGAYSLFDMAKFPLKLAGTAVINLRADQINDMVYSLLEKGKLLVRDTNKEVFVGDSMVNVI</sequence>
<proteinExistence type="inferred from homology"/>
<name>R1AB_CVBM</name>
<protein>
    <recommendedName>
        <fullName>Replicase polyprotein 1ab</fullName>
        <shortName>pp1ab</shortName>
    </recommendedName>
    <alternativeName>
        <fullName>ORF1ab polyprotein</fullName>
    </alternativeName>
    <component>
        <recommendedName>
            <fullName>Host translation inhibitor nsp1</fullName>
            <shortName>nsp1</shortName>
        </recommendedName>
        <alternativeName>
            <fullName>p28</fullName>
        </alternativeName>
    </component>
    <component>
        <recommendedName>
            <fullName>Non-structural protein 2</fullName>
            <shortName>nsp2</shortName>
        </recommendedName>
        <alternativeName>
            <fullName>p65</fullName>
        </alternativeName>
    </component>
    <component>
        <recommendedName>
            <fullName>Papain-like proteinase nsp3</fullName>
            <shortName>PL-PRO</shortName>
            <ecNumber>3.4.19.12</ecNumber>
            <ecNumber>3.4.22.-</ecNumber>
        </recommendedName>
        <alternativeName>
            <fullName>Non-structural protein 3</fullName>
            <shortName>nsp3</shortName>
        </alternativeName>
        <alternativeName>
            <fullName>p210</fullName>
        </alternativeName>
    </component>
    <component>
        <recommendedName>
            <fullName>Non-structural protein 4</fullName>
            <shortName>nsp4</shortName>
        </recommendedName>
        <alternativeName>
            <fullName>Peptide HD2</fullName>
        </alternativeName>
        <alternativeName>
            <fullName>p44</fullName>
        </alternativeName>
    </component>
    <component>
        <recommendedName>
            <fullName>3C-like proteinase nsp5</fullName>
            <shortName>3CL-PRO</shortName>
            <shortName>3CLp</shortName>
            <ecNumber>3.4.22.-</ecNumber>
        </recommendedName>
        <alternativeName>
            <fullName>M-PRO</fullName>
        </alternativeName>
        <alternativeName>
            <fullName>nsp5</fullName>
        </alternativeName>
        <alternativeName>
            <fullName>p27</fullName>
        </alternativeName>
    </component>
    <component>
        <recommendedName>
            <fullName>Non-structural protein 6</fullName>
            <shortName>nsp6</shortName>
        </recommendedName>
    </component>
    <component>
        <recommendedName>
            <fullName>Non-structural protein 7</fullName>
            <shortName>nsp7</shortName>
        </recommendedName>
        <alternativeName>
            <fullName>p10</fullName>
        </alternativeName>
    </component>
    <component>
        <recommendedName>
            <fullName>Non-structural protein 8</fullName>
            <shortName>nsp8</shortName>
        </recommendedName>
        <alternativeName>
            <fullName>p22</fullName>
        </alternativeName>
    </component>
    <component>
        <recommendedName>
            <fullName>Viral protein genome-linked nsp9</fullName>
        </recommendedName>
        <alternativeName>
            <fullName>Non-structural protein 9</fullName>
            <shortName>nsp9</shortName>
        </alternativeName>
        <alternativeName>
            <fullName>RNA-capping enzyme subunit nsp9</fullName>
        </alternativeName>
        <alternativeName>
            <fullName>p12</fullName>
        </alternativeName>
    </component>
    <component>
        <recommendedName>
            <fullName>Non-structural protein 10</fullName>
            <shortName>nsp10</shortName>
        </recommendedName>
        <alternativeName>
            <fullName>Growth factor-like peptide</fullName>
            <shortName>GFL</shortName>
        </alternativeName>
        <alternativeName>
            <fullName>p15</fullName>
        </alternativeName>
    </component>
    <component>
        <recommendedName>
            <fullName>RNA-directed RNA polymerase nsp12</fullName>
            <shortName>Pol</shortName>
            <shortName>RdRp</shortName>
            <ecNumber>2.7.7.48</ecNumber>
            <ecNumber>2.7.7.50</ecNumber>
        </recommendedName>
        <alternativeName>
            <fullName>nsp12</fullName>
        </alternativeName>
        <alternativeName>
            <fullName>p100</fullName>
        </alternativeName>
    </component>
    <component>
        <recommendedName>
            <fullName>Helicase nsp13</fullName>
            <shortName>Hel</shortName>
            <ecNumber>3.6.4.12</ecNumber>
            <ecNumber>3.6.4.13</ecNumber>
        </recommendedName>
        <alternativeName>
            <fullName>nsp13</fullName>
        </alternativeName>
        <alternativeName>
            <fullName>p67</fullName>
        </alternativeName>
    </component>
    <component>
        <recommendedName>
            <fullName>Guanine-N7 methyltransferase nsp14</fullName>
            <shortName>ExoN</shortName>
            <ecNumber>2.1.1.56</ecNumber>
            <ecNumber>3.1.13.-</ecNumber>
        </recommendedName>
        <alternativeName>
            <fullName>nsp14</fullName>
        </alternativeName>
    </component>
    <component>
        <recommendedName>
            <fullName>Uridylate-specific endoribonuclease nsp15</fullName>
            <ecNumber>4.6.1.-</ecNumber>
        </recommendedName>
        <alternativeName>
            <fullName>NendoU</fullName>
        </alternativeName>
        <alternativeName>
            <fullName>nsp15</fullName>
        </alternativeName>
        <alternativeName>
            <fullName>p35</fullName>
        </alternativeName>
    </component>
    <component>
        <recommendedName>
            <fullName>2'-O-methyltransferase nsp16</fullName>
            <ecNumber>2.1.1.57</ecNumber>
        </recommendedName>
        <alternativeName>
            <fullName>nsp16</fullName>
        </alternativeName>
    </component>
</protein>
<accession>P0C6W9</accession>
<accession>Q66198</accession>
<accession>Q9WQ81</accession>
<comment type="function">
    <text evidence="2">The replicase polyprotein of coronaviruses is a multifunctional protein: it contains the activities necessary for the transcription of negative stranded RNA, leader RNA, subgenomic mRNAs and progeny virion RNA as well as proteinases responsible for the cleavage of the polyprotein into functional products.</text>
</comment>
<comment type="function">
    <molecule>Host translation inhibitor nsp1</molecule>
    <text evidence="2">Inhibits host translation by interacting with the 40S ribosomal subunit. The nsp1-40S ribosome complex further induces an endonucleolytic cleavage near the 5'UTR of host mRNAs, targeting them for degradation. Viral mRNAs are not susceptible to nsp1-mediated endonucleolytic RNA cleavage thanks to the presence of a 5'-end leader sequence and are therefore protected from degradation. By suppressing host gene expression, nsp1 facilitates efficient viral gene expression in infected cells and evasion from host immune response.</text>
</comment>
<comment type="function">
    <molecule>Non-structural protein 2</molecule>
    <text evidence="2">May play a role in the modulation of host cell survival signaling pathway by interacting with host PHB and PHB2. Indeed, these two proteins play a role in maintaining the functional integrity of the mitochondria and protecting cells from various stresses.</text>
</comment>
<comment type="function">
    <molecule>Papain-like proteinase nsp3</molecule>
    <text evidence="2">Responsible for the cleavages located at the N-terminus of the replicase polyprotein. In addition, PL-PRO possesses a deubiquitinating/deISGylating activity and processes both 'Lys-48'- and 'Lys-63'-linked polyubiquitin chains from cellular substrates. Participates together with nsp4 in the assembly of virally-induced cytoplasmic double-membrane vesicles necessary for viral replication. Antagonizes innate immune induction of type I interferon by blocking the phosphorylation, dimerization and subsequent nuclear translocation of host IRF3. Also prevents host NF-kappa-B signaling.</text>
</comment>
<comment type="function">
    <molecule>Non-structural protein 4</molecule>
    <text evidence="2">Participates in the assembly of virally-induced cytoplasmic double-membrane vesicles necessary for viral replication.</text>
</comment>
<comment type="function">
    <molecule>3C-like proteinase nsp5</molecule>
    <text evidence="2 9">Cleaves the C-terminus of replicase polyprotein at 11 sites. Recognizes substrates containing the core sequence [ILMVF]-Q-|-[SGACN]. Also able to bind an ADP-ribose-1''-phosphate (ADRP).</text>
</comment>
<comment type="function">
    <molecule>Non-structural protein 6</molecule>
    <text evidence="2">Plays a role in the initial induction of autophagosomes from host endoplasmic reticulum. Later, limits the expansion of these phagosomes that are no longer able to deliver viral components to lysosomes.</text>
</comment>
<comment type="function">
    <molecule>Non-structural protein 7</molecule>
    <text evidence="2">Forms a hexadecamer with nsp8 (8 subunits of each) that may participate in viral replication by acting as a primase. Alternatively, may synthesize substantially longer products than oligonucleotide primers.</text>
</comment>
<comment type="function">
    <molecule>Non-structural protein 8</molecule>
    <text evidence="2">Forms a hexadecamer with nsp7 (8 subunits of each) that may participate in viral replication by acting as a primase. Alternatively, may synthesize substantially longer products than oligonucleotide primers.</text>
</comment>
<comment type="function">
    <molecule>Viral protein genome-linked nsp9</molecule>
    <text evidence="3">Forms a primer, NSP9-pU, which is utilized by the polymerase for the initiation of RNA chains. Interacts with ribosome signal recognition particle RNA (SRP). Together with NSP8, suppress protein integration into the cell membrane, thereby disrupting host immune defenses.</text>
</comment>
<comment type="function">
    <molecule>Non-structural protein 10</molecule>
    <text evidence="2">Plays a pivotal role in viral transcription by stimulating both nsp14 3'-5' exoribonuclease and nsp16 2'-O-methyltransferase activities. Therefore plays an essential role in viral mRNAs cap methylation.</text>
</comment>
<comment type="function">
    <molecule>RNA-directed RNA polymerase nsp12</molecule>
    <text evidence="3">RNA-directed RNA polymerase that catalyzes the transcription of viral genomic and subgenomic RNAs. Acts in complex with nsp7 and nsp8 to transcribe both the minus and positive strands of genomic RNA. The kinase-like NiRAN domain of NSP12 attaches one or more nucleotides to the amino terminus of NSP9, forming a covalent RNA-protein intermediate that serves as transcription/replication primer. Subgenomic RNAs (sgRNAs) are formed by discontinuous transcription: The polymerase has the ability to pause at transcription-regulating sequences (TRS) and jump to the leader TRS, resulting in a major deletion. This creates a series of subgenomic RNAs that are replicated, transcribed and translated. In addition, Nsp12 is a subunit of the viral RNA capping enzyme that catalyzes the RNA guanylyltransferase reaction for genomic and sub-genomic RNAs. Subsequently, the NiRAN domain transfers RNA to GDP, and forms the core cap structure GpppA-RNA.</text>
</comment>
<comment type="function">
    <molecule>Helicase nsp13</molecule>
    <text evidence="2">Multi-functional protein with a zinc-binding domain in N-terminus displaying RNA and DNA duplex-unwinding activities with 5' to 3' polarity. Activity of helicase is dependent on magnesium.</text>
</comment>
<comment type="function">
    <molecule>Guanine-N7 methyltransferase nsp14</molecule>
    <text evidence="2">Plays a role in viral RNA synthesis through two distinct activities. The N7-guanine methyltransferase activity plays a role in the formation of the cap structure GpppA-RNA. The proofreading exoribonuclease reduces the sensitivity of the virus to RNA mutagens during replication. This activity acts on both ssRNA and dsRNA in a 3'-5' direction.</text>
</comment>
<comment type="function">
    <molecule>Uridylate-specific endoribonuclease nsp15</molecule>
    <text evidence="2">Plays a role in viral transcription/replication and prevents the simultaneous activation of host cell dsRNA sensors, such as MDA5/IFIH1, OAS, and PKR (By similarity). Acts by degrading the 5'-polyuridines generated during replication of the poly(A) region of viral genomic and subgenomic RNAs. Catalyzes a two-step reaction in which a 2'3'-cyclic phosphate (2'3'-cP) is first generated by 2'-O transesterification, which is then hydrolyzed to a 3'-phosphate (3'-P) (By similarity). If not degraded, poly(U) RNA would hybridize with poly(A) RNA tails and activate host dsRNA sensors (By similarity).</text>
</comment>
<comment type="function">
    <molecule>2'-O-methyltransferase nsp16</molecule>
    <text evidence="2">Methyltransferase that mediates mRNA cap 2'-O-ribose methylation to the 5'-cap structure of viral mRNAs. N7-methyl guanosine cap is a prerequisite for binding of nsp16. Therefore plays an essential role in viral mRNAs cap methylation which is essential to evade immune system.</text>
</comment>
<comment type="catalytic activity">
    <molecule>RNA-directed RNA polymerase nsp12</molecule>
    <reaction evidence="8">
        <text>RNA(n) + a ribonucleoside 5'-triphosphate = RNA(n+1) + diphosphate</text>
        <dbReference type="Rhea" id="RHEA:21248"/>
        <dbReference type="Rhea" id="RHEA-COMP:14527"/>
        <dbReference type="Rhea" id="RHEA-COMP:17342"/>
        <dbReference type="ChEBI" id="CHEBI:33019"/>
        <dbReference type="ChEBI" id="CHEBI:61557"/>
        <dbReference type="ChEBI" id="CHEBI:140395"/>
        <dbReference type="EC" id="2.7.7.48"/>
    </reaction>
</comment>
<comment type="catalytic activity">
    <molecule>Helicase nsp13</molecule>
    <reaction>
        <text>ATP + H2O = ADP + phosphate + H(+)</text>
        <dbReference type="Rhea" id="RHEA:13065"/>
        <dbReference type="ChEBI" id="CHEBI:15377"/>
        <dbReference type="ChEBI" id="CHEBI:15378"/>
        <dbReference type="ChEBI" id="CHEBI:30616"/>
        <dbReference type="ChEBI" id="CHEBI:43474"/>
        <dbReference type="ChEBI" id="CHEBI:456216"/>
        <dbReference type="EC" id="3.6.4.12"/>
    </reaction>
</comment>
<comment type="catalytic activity">
    <molecule>Helicase nsp13</molecule>
    <reaction>
        <text>ATP + H2O = ADP + phosphate + H(+)</text>
        <dbReference type="Rhea" id="RHEA:13065"/>
        <dbReference type="ChEBI" id="CHEBI:15377"/>
        <dbReference type="ChEBI" id="CHEBI:15378"/>
        <dbReference type="ChEBI" id="CHEBI:30616"/>
        <dbReference type="ChEBI" id="CHEBI:43474"/>
        <dbReference type="ChEBI" id="CHEBI:456216"/>
        <dbReference type="EC" id="3.6.4.13"/>
    </reaction>
</comment>
<comment type="catalytic activity">
    <molecule>Papain-like proteinase nsp3</molecule>
    <reaction>
        <text>Thiol-dependent hydrolysis of ester, thioester, amide, peptide and isopeptide bonds formed by the C-terminal Gly of ubiquitin (a 76-residue protein attached to proteins as an intracellular targeting signal).</text>
        <dbReference type="EC" id="3.4.19.12"/>
    </reaction>
</comment>
<comment type="catalytic activity">
    <molecule>2'-O-methyltransferase nsp16</molecule>
    <reaction evidence="2">
        <text>a 5'-end (N(7)-methyl 5'-triphosphoguanosine)-ribonucleoside in mRNA + S-adenosyl-L-methionine = a 5'-end (N(7)-methyl 5'-triphosphoguanosine)-(2'-O-methyl-ribonucleoside) in mRNA + S-adenosyl-L-homocysteine + H(+)</text>
        <dbReference type="Rhea" id="RHEA:67020"/>
        <dbReference type="Rhea" id="RHEA-COMP:17167"/>
        <dbReference type="Rhea" id="RHEA-COMP:17168"/>
        <dbReference type="ChEBI" id="CHEBI:15378"/>
        <dbReference type="ChEBI" id="CHEBI:57856"/>
        <dbReference type="ChEBI" id="CHEBI:59789"/>
        <dbReference type="ChEBI" id="CHEBI:156461"/>
        <dbReference type="ChEBI" id="CHEBI:167609"/>
        <dbReference type="EC" id="2.1.1.57"/>
    </reaction>
</comment>
<comment type="catalytic activity">
    <molecule>Uridylate-specific endoribonuclease nsp15</molecule>
    <reaction evidence="2">
        <text>uridylyl-uridylyl-ribonucleotide-RNA = a 3'-end uridylyl-2',3'-cyclophospho-uridine-RNA + a 5'-end dephospho-ribonucleoside-RNA</text>
        <dbReference type="Rhea" id="RHEA:67732"/>
        <dbReference type="Rhea" id="RHEA-COMP:13936"/>
        <dbReference type="Rhea" id="RHEA-COMP:17334"/>
        <dbReference type="Rhea" id="RHEA-COMP:17335"/>
        <dbReference type="ChEBI" id="CHEBI:138284"/>
        <dbReference type="ChEBI" id="CHEBI:173079"/>
        <dbReference type="ChEBI" id="CHEBI:173080"/>
    </reaction>
</comment>
<comment type="catalytic activity">
    <molecule>RNA-directed RNA polymerase nsp12</molecule>
    <reaction evidence="3">
        <text>a 5'-end diphospho-ribonucleoside in mRNA + GTP + H(+) = a 5'-end (5'-triphosphoguanosine)-ribonucleoside in mRNA + diphosphate</text>
        <dbReference type="Rhea" id="RHEA:67012"/>
        <dbReference type="Rhea" id="RHEA-COMP:17165"/>
        <dbReference type="Rhea" id="RHEA-COMP:17166"/>
        <dbReference type="ChEBI" id="CHEBI:15378"/>
        <dbReference type="ChEBI" id="CHEBI:33019"/>
        <dbReference type="ChEBI" id="CHEBI:37565"/>
        <dbReference type="ChEBI" id="CHEBI:167616"/>
        <dbReference type="ChEBI" id="CHEBI:167617"/>
        <dbReference type="EC" id="2.7.7.50"/>
    </reaction>
    <physiologicalReaction direction="left-to-right" evidence="3">
        <dbReference type="Rhea" id="RHEA:67013"/>
    </physiologicalReaction>
</comment>
<comment type="catalytic activity">
    <molecule>Guanine-N7 methyltransferase nsp14</molecule>
    <reaction evidence="2">
        <text>a 5'-end (5'-triphosphoguanosine)-ribonucleoside in mRNA + S-adenosyl-L-methionine = a 5'-end (N(7)-methyl 5'-triphosphoguanosine)-ribonucleoside in mRNA + S-adenosyl-L-homocysteine</text>
        <dbReference type="Rhea" id="RHEA:67008"/>
        <dbReference type="Rhea" id="RHEA-COMP:17166"/>
        <dbReference type="Rhea" id="RHEA-COMP:17167"/>
        <dbReference type="ChEBI" id="CHEBI:57856"/>
        <dbReference type="ChEBI" id="CHEBI:59789"/>
        <dbReference type="ChEBI" id="CHEBI:156461"/>
        <dbReference type="ChEBI" id="CHEBI:167617"/>
        <dbReference type="EC" id="2.1.1.56"/>
    </reaction>
    <physiologicalReaction direction="left-to-right" evidence="2">
        <dbReference type="Rhea" id="RHEA:67009"/>
    </physiologicalReaction>
</comment>
<comment type="cofactor">
    <molecule>Uridylate-specific endoribonuclease nsp15</molecule>
    <cofactor evidence="2">
        <name>Mn(2+)</name>
        <dbReference type="ChEBI" id="CHEBI:29035"/>
    </cofactor>
    <text evidence="2">Likely affects Nsp15 binding to RNA.</text>
</comment>
<comment type="cofactor">
    <molecule>RNA-directed RNA polymerase nsp12</molecule>
    <cofactor evidence="3">
        <name>Mg(2+)</name>
        <dbReference type="ChEBI" id="CHEBI:18420"/>
    </cofactor>
</comment>
<comment type="subunit">
    <molecule>Non-structural protein 2</molecule>
    <text evidence="2">Interacts with host PHB and PHB2.</text>
</comment>
<comment type="subunit">
    <molecule>Non-structural protein 4</molecule>
    <text evidence="2">Interacts with papain-like protease nsp3 and non-structural protein 6.</text>
</comment>
<comment type="subunit">
    <molecule>3C-like proteinase nsp5</molecule>
    <text evidence="2">Monomer. Homodimer. Only the homodimer shows catalytic activity.</text>
</comment>
<comment type="subunit">
    <molecule>Non-structural protein 7</molecule>
    <text evidence="3">Interacts with nsp8 and nsp12 to form the replication-transcription complex (RTC): nsp12, nsp7, two subunits of nsp8, and up to two subunits of nsp13.</text>
</comment>
<comment type="subunit">
    <molecule>Non-structural protein 8</molecule>
    <text evidence="3">Interacts with nsp7, nsp13 and nsp12 to form the replication-transcription complex (RTC): nsp12, nsp7, two subunits of nsp8, and up to two subunits of nsp13.</text>
</comment>
<comment type="subunit">
    <molecule>Viral protein genome-linked nsp9</molecule>
    <text evidence="3">Interacts with nsp12.</text>
</comment>
<comment type="subunit">
    <molecule>Non-structural protein 10</molecule>
    <text evidence="3">Interacts with proofreading exoribonuclease nsp14 and 2'-O-methyltransferase nsp16; these interactions enhance nsp14 and nsp16 enzymatic activities.</text>
</comment>
<comment type="subunit">
    <molecule>RNA-directed RNA polymerase nsp12</molecule>
    <text evidence="3">Interacts with nsp7 and nsp8 to form the replication-transcription complex (RTC): nsp12, nsp7, two subunits of nsp8, and up to two subunits of nsp13. Interacts with nsp9.</text>
</comment>
<comment type="subunit">
    <molecule>Helicase nsp13</molecule>
    <text evidence="3">Interacts with nsp8 to form the replication-transcription complex (RTC): nsp12, nsp7, two subunits of nsp8, and up to two subunits of nsp13.</text>
</comment>
<comment type="subcellular location">
    <molecule>Papain-like proteinase nsp3</molecule>
    <subcellularLocation>
        <location>Host membrane</location>
        <topology>Multi-pass membrane protein</topology>
    </subcellularLocation>
    <subcellularLocation>
        <location evidence="2">Host cytoplasm</location>
    </subcellularLocation>
</comment>
<comment type="subcellular location">
    <molecule>Non-structural protein 4</molecule>
    <subcellularLocation>
        <location>Host membrane</location>
        <topology>Multi-pass membrane protein</topology>
    </subcellularLocation>
    <subcellularLocation>
        <location>Host cytoplasm</location>
    </subcellularLocation>
    <text evidence="2">Localizes in virally-induced cytoplasmic double-membrane vesicles.</text>
</comment>
<comment type="subcellular location">
    <molecule>Non-structural protein 6</molecule>
    <subcellularLocation>
        <location evidence="36">Host membrane</location>
        <topology evidence="36">Multi-pass membrane protein</topology>
    </subcellularLocation>
</comment>
<comment type="subcellular location">
    <molecule>Non-structural protein 7</molecule>
    <subcellularLocation>
        <location evidence="1">Host cytoplasm</location>
        <location evidence="1">Host perinuclear region</location>
    </subcellularLocation>
    <text evidence="1">nsp7, nsp8, nsp9 and nsp10 are localized in cytoplasmic foci, largely perinuclear. Late in infection, they merge into confluent complexes (By similarity).</text>
</comment>
<comment type="subcellular location">
    <molecule>Non-structural protein 8</molecule>
    <subcellularLocation>
        <location evidence="1">Host cytoplasm</location>
        <location evidence="1">Host perinuclear region</location>
    </subcellularLocation>
    <text evidence="1">nsp7, nsp8, nsp9 and nsp10 are localized in cytoplasmic foci, largely perinuclear. Late in infection, they merge into confluent complexes (By similarity).</text>
</comment>
<comment type="subcellular location">
    <molecule>Viral protein genome-linked nsp9</molecule>
    <subcellularLocation>
        <location evidence="1">Host cytoplasm</location>
        <location evidence="1">Host perinuclear region</location>
    </subcellularLocation>
    <text evidence="1">nsp7, nsp8, nsp9 and nsp10 are localized in cytoplasmic foci, largely perinuclear. Late in infection, they merge into confluent complexes (By similarity).</text>
</comment>
<comment type="subcellular location">
    <molecule>Non-structural protein 10</molecule>
    <subcellularLocation>
        <location evidence="1">Host cytoplasm</location>
        <location evidence="1">Host perinuclear region</location>
    </subcellularLocation>
    <text evidence="1">nsp7, nsp8, nsp9 and nsp10 are localized in cytoplasmic foci, largely perinuclear. Late in infection, they merge into confluent complexes (By similarity).</text>
</comment>
<comment type="subcellular location">
    <molecule>Helicase nsp13</molecule>
    <subcellularLocation>
        <location evidence="36">Host endoplasmic reticulum-Golgi intermediate compartment</location>
    </subcellularLocation>
    <text evidence="1">The helicase interacts with the N protein in membranous complexes and colocalizes with sites of synthesis of new viral RNA.</text>
</comment>
<comment type="subcellular location">
    <molecule>Uridylate-specific endoribonuclease nsp15</molecule>
    <subcellularLocation>
        <location evidence="1">Host cytoplasm</location>
        <location evidence="1">Host perinuclear region</location>
    </subcellularLocation>
</comment>
<comment type="alternative products">
    <event type="ribosomal frameshifting"/>
    <isoform>
        <id>P0C6W9-1</id>
        <name>Replicase polyprotein 1ab</name>
        <name>pp1ab</name>
        <sequence type="displayed"/>
    </isoform>
    <isoform>
        <id>P0C6U0-1</id>
        <name>Replicase polyprotein 1a</name>
        <name>pp1a</name>
        <name>ORF1a polyprotein</name>
        <sequence type="external"/>
    </isoform>
</comment>
<comment type="domain">
    <text>The hydrophobic domains (HD) could mediate the membrane association of the replication complex and thereby alter the architecture of the host cell membrane.</text>
</comment>
<comment type="PTM">
    <text evidence="1">Specific enzymatic cleavages in vivo by its own proteases yield mature proteins. 3CL-PRO and PL-PRO proteinases are autocatalytically processed (By similarity).</text>
</comment>
<comment type="miscellaneous">
    <molecule>Isoform Replicase polyprotein 1ab</molecule>
    <text>Produced by -1 ribosomal frameshifting at the 1a-1b genes boundary.</text>
</comment>
<comment type="similarity">
    <text evidence="36">Belongs to the coronaviruses polyprotein 1ab family.</text>
</comment>
<feature type="chain" id="PRO_0000037259" description="Host translation inhibitor nsp1" evidence="2">
    <location>
        <begin position="1"/>
        <end position="246"/>
    </location>
</feature>
<feature type="chain" id="PRO_0000037260" description="Non-structural protein 2" evidence="2">
    <location>
        <begin position="247"/>
        <end position="851"/>
    </location>
</feature>
<feature type="chain" id="PRO_0000037261" description="Papain-like proteinase nsp3" evidence="2">
    <location>
        <begin position="852"/>
        <end position="2750"/>
    </location>
</feature>
<feature type="chain" id="PRO_0000037262" description="Non-structural protein 4" evidence="2">
    <location>
        <begin position="2751"/>
        <end position="3246"/>
    </location>
</feature>
<feature type="chain" id="PRO_0000037263" description="3C-like proteinase nsp5" evidence="2">
    <location>
        <begin position="3247"/>
        <end position="3549"/>
    </location>
</feature>
<feature type="chain" id="PRO_0000037264" description="Non-structural protein 6" evidence="2">
    <location>
        <begin position="3550"/>
        <end position="3836"/>
    </location>
</feature>
<feature type="chain" id="PRO_0000037265" description="Non-structural protein 7" evidence="2">
    <location>
        <begin position="3837"/>
        <end position="3925"/>
    </location>
</feature>
<feature type="chain" id="PRO_0000037266" description="Non-structural protein 8" evidence="2">
    <location>
        <begin position="3926"/>
        <end position="4122"/>
    </location>
</feature>
<feature type="chain" id="PRO_0000037267" description="Viral protein genome-linked nsp9" evidence="2">
    <location>
        <begin position="4123"/>
        <end position="4232"/>
    </location>
</feature>
<feature type="chain" id="PRO_0000037268" description="Non-structural protein 10" evidence="2">
    <location>
        <begin position="4233"/>
        <end position="4369"/>
    </location>
</feature>
<feature type="chain" id="PRO_0000037269" description="RNA-directed RNA polymerase nsp12" evidence="2">
    <location>
        <begin position="4370"/>
        <end position="5297"/>
    </location>
</feature>
<feature type="chain" id="PRO_0000037270" description="Helicase nsp13" evidence="2">
    <location>
        <begin position="5298"/>
        <end position="5900"/>
    </location>
</feature>
<feature type="chain" id="PRO_0000037271" description="Guanine-N7 methyltransferase nsp14" evidence="2">
    <location>
        <begin position="5901"/>
        <end position="6421"/>
    </location>
</feature>
<feature type="chain" id="PRO_0000037272" description="Uridylate-specific endoribonuclease nsp15" evidence="2">
    <location>
        <begin position="6422"/>
        <end position="6795"/>
    </location>
</feature>
<feature type="chain" id="PRO_0000037273" description="2'-O-methyltransferase nsp16" evidence="2">
    <location>
        <begin position="6796"/>
        <end position="7094"/>
    </location>
</feature>
<feature type="transmembrane region" description="Helical" evidence="4">
    <location>
        <begin position="2138"/>
        <end position="2158"/>
    </location>
</feature>
<feature type="transmembrane region" description="Helical" evidence="4">
    <location>
        <begin position="2199"/>
        <end position="2219"/>
    </location>
</feature>
<feature type="transmembrane region" description="Helical" evidence="4">
    <location>
        <begin position="2221"/>
        <end position="2241"/>
    </location>
</feature>
<feature type="transmembrane region" description="Helical" evidence="4">
    <location>
        <begin position="2313"/>
        <end position="2333"/>
    </location>
</feature>
<feature type="transmembrane region" description="Helical" evidence="4">
    <location>
        <begin position="2343"/>
        <end position="2363"/>
    </location>
</feature>
<feature type="transmembrane region" description="Helical" evidence="4">
    <location>
        <begin position="2365"/>
        <end position="2385"/>
    </location>
</feature>
<feature type="transmembrane region" description="Helical" evidence="4">
    <location>
        <begin position="2752"/>
        <end position="2772"/>
    </location>
</feature>
<feature type="transmembrane region" description="Helical" evidence="4">
    <location>
        <begin position="3031"/>
        <end position="3051"/>
    </location>
</feature>
<feature type="transmembrane region" description="Helical" evidence="4">
    <location>
        <begin position="3063"/>
        <end position="3083"/>
    </location>
</feature>
<feature type="transmembrane region" description="Helical" evidence="4">
    <location>
        <begin position="3090"/>
        <end position="3110"/>
    </location>
</feature>
<feature type="transmembrane region" description="Helical" evidence="4">
    <location>
        <begin position="3115"/>
        <end position="3135"/>
    </location>
</feature>
<feature type="transmembrane region" description="Helical" evidence="4">
    <location>
        <begin position="3558"/>
        <end position="3578"/>
    </location>
</feature>
<feature type="transmembrane region" description="Helical" evidence="4">
    <location>
        <begin position="3588"/>
        <end position="3608"/>
    </location>
</feature>
<feature type="transmembrane region" description="Helical" evidence="4">
    <location>
        <begin position="3615"/>
        <end position="3635"/>
    </location>
</feature>
<feature type="transmembrane region" description="Helical" evidence="4">
    <location>
        <begin position="3657"/>
        <end position="3677"/>
    </location>
</feature>
<feature type="transmembrane region" description="Helical" evidence="4">
    <location>
        <begin position="3684"/>
        <end position="3704"/>
    </location>
</feature>
<feature type="transmembrane region" description="Helical" evidence="4">
    <location>
        <begin position="3711"/>
        <end position="3731"/>
    </location>
</feature>
<feature type="transmembrane region" description="Helical" evidence="4">
    <location>
        <begin position="3755"/>
        <end position="3775"/>
    </location>
</feature>
<feature type="domain" description="CoV Nsp1 globular" evidence="26">
    <location>
        <begin position="54"/>
        <end position="196"/>
    </location>
</feature>
<feature type="domain" description="BetaCoV Nsp1 C-terminal" evidence="27">
    <location>
        <begin position="216"/>
        <end position="246"/>
    </location>
</feature>
<feature type="domain" description="CoV Nsp2 N-terminal" evidence="28">
    <location>
        <begin position="250"/>
        <end position="519"/>
    </location>
</feature>
<feature type="domain" description="CoV Nsp2 middle" evidence="29">
    <location>
        <begin position="524"/>
        <end position="713"/>
    </location>
</feature>
<feature type="domain" description="CoV Nsp2 C-terminal" evidence="30">
    <location>
        <begin position="733"/>
        <end position="851"/>
    </location>
</feature>
<feature type="domain" description="Ubiquitin-like 1" evidence="5">
    <location>
        <begin position="853"/>
        <end position="966"/>
    </location>
</feature>
<feature type="domain" description="Peptidase C16 1" evidence="6">
    <location>
        <begin position="1036"/>
        <end position="1274"/>
    </location>
</feature>
<feature type="domain" description="Macro" evidence="7">
    <location>
        <begin position="1275"/>
        <end position="1435"/>
    </location>
</feature>
<feature type="domain" description="DPUP" evidence="11">
    <location>
        <begin position="1491"/>
        <end position="1563"/>
    </location>
</feature>
<feature type="domain" description="Ubiquitin-like 2" evidence="5">
    <location>
        <begin position="1562"/>
        <end position="1617"/>
    </location>
</feature>
<feature type="domain" description="Peptidase C16 2" evidence="6">
    <location>
        <begin position="1631"/>
        <end position="1892"/>
    </location>
</feature>
<feature type="domain" description="Nucleic acid-binding" evidence="12">
    <location>
        <begin position="1906"/>
        <end position="2007"/>
    </location>
</feature>
<feature type="domain" description="G2M" evidence="33">
    <location>
        <begin position="2020"/>
        <end position="2169"/>
    </location>
</feature>
<feature type="domain" description="3Ecto" evidence="32">
    <location>
        <begin position="2235"/>
        <end position="2296"/>
    </location>
</feature>
<feature type="domain" description="CoV Nsp3 Y" evidence="31">
    <location>
        <begin position="2383"/>
        <end position="2750"/>
    </location>
</feature>
<feature type="domain" description="Nsp4C" evidence="13">
    <location>
        <begin position="3149"/>
        <end position="3246"/>
    </location>
</feature>
<feature type="domain" description="Peptidase C30" evidence="9">
    <location>
        <begin position="3247"/>
        <end position="3549"/>
    </location>
</feature>
<feature type="domain" description="RdRp Nsp7 cofactor" evidence="16">
    <location>
        <begin position="3837"/>
        <end position="3925"/>
    </location>
</feature>
<feature type="domain" description="RdRp Nsp8 cofactor" evidence="17">
    <location>
        <begin position="3926"/>
        <end position="4122"/>
    </location>
</feature>
<feature type="domain" description="Nsp9 ssRNA-binding" evidence="18">
    <location>
        <begin position="4123"/>
        <end position="4232"/>
    </location>
</feature>
<feature type="domain" description="ExoN/MTase coactivator" evidence="19">
    <location>
        <begin position="4233"/>
        <end position="4370"/>
    </location>
</feature>
<feature type="domain" description="NiRAN" evidence="14">
    <location>
        <begin position="4375"/>
        <end position="4630"/>
    </location>
</feature>
<feature type="domain" description="Nsp12 Interface" evidence="34">
    <location>
        <begin position="4631"/>
        <end position="4729"/>
    </location>
</feature>
<feature type="domain" description="Nsp12 RNA-dependent RNA polymerase" evidence="15">
    <location>
        <begin position="4730"/>
        <end position="5297"/>
    </location>
</feature>
<feature type="domain" description="RdRp catalytic" evidence="8">
    <location>
        <begin position="4977"/>
        <end position="5139"/>
    </location>
</feature>
<feature type="domain" description="CV ZBD" evidence="10">
    <location>
        <begin position="5298"/>
        <end position="5410"/>
    </location>
</feature>
<feature type="domain" description="(+)RNA virus helicase ATP-binding">
    <location>
        <begin position="5553"/>
        <end position="5734"/>
    </location>
</feature>
<feature type="domain" description="(+)RNA virus helicase C-terminal">
    <location>
        <begin position="5735"/>
        <end position="5904"/>
    </location>
</feature>
<feature type="domain" description="ExoN" evidence="20">
    <location>
        <begin position="5971"/>
        <end position="6186"/>
    </location>
</feature>
<feature type="domain" description="N7-MTase" evidence="21">
    <location>
        <begin position="6195"/>
        <end position="6421"/>
    </location>
</feature>
<feature type="domain" description="Nsp15 N-terminal oligomerization" evidence="24">
    <location>
        <begin position="6422"/>
        <end position="6482"/>
    </location>
</feature>
<feature type="domain" description="AV-Nsp11N/CoV-Nsp15M" evidence="25">
    <location>
        <begin position="6483"/>
        <end position="6603"/>
    </location>
</feature>
<feature type="domain" description="NendoU" evidence="23">
    <location>
        <begin position="6653"/>
        <end position="6792"/>
    </location>
</feature>
<feature type="domain" description="Nidovirus-type SAM-dependent 2'-O-MTase" evidence="22">
    <location>
        <begin position="6797"/>
        <end position="7091"/>
    </location>
</feature>
<feature type="zinc finger region" description="C4-type 1" evidence="6">
    <location>
        <begin position="1151"/>
        <end position="1179"/>
    </location>
</feature>
<feature type="zinc finger region" description="C4-type 2" evidence="6">
    <location>
        <begin position="1749"/>
        <end position="1785"/>
    </location>
</feature>
<feature type="zinc finger region" evidence="1">
    <location>
        <begin position="4306"/>
        <end position="4322"/>
    </location>
</feature>
<feature type="zinc finger region" evidence="1">
    <location>
        <begin position="4348"/>
        <end position="4361"/>
    </location>
</feature>
<feature type="region of interest" description="C4" evidence="28">
    <location>
        <begin position="392"/>
        <end position="416"/>
    </location>
</feature>
<feature type="region of interest" description="Disordered" evidence="35">
    <location>
        <begin position="972"/>
        <end position="992"/>
    </location>
</feature>
<feature type="region of interest" description="HD1">
    <location>
        <begin position="2138"/>
        <end position="2385"/>
    </location>
</feature>
<feature type="region of interest" description="Y1" evidence="31">
    <location>
        <begin position="2383"/>
        <end position="2473"/>
    </location>
</feature>
<feature type="region of interest" description="ZF1" evidence="31">
    <location>
        <begin position="2387"/>
        <end position="2400"/>
    </location>
</feature>
<feature type="region of interest" description="ZF2" evidence="31">
    <location>
        <begin position="2433"/>
        <end position="2443"/>
    </location>
</feature>
<feature type="region of interest" description="CoV-Y" evidence="31">
    <location>
        <begin position="2474"/>
        <end position="2750"/>
    </location>
</feature>
<feature type="region of interest" description="Y2" evidence="31">
    <location>
        <begin position="2474"/>
        <end position="2566"/>
    </location>
</feature>
<feature type="region of interest" description="Y3" evidence="31">
    <location>
        <begin position="2567"/>
        <end position="2649"/>
    </location>
</feature>
<feature type="region of interest" description="Y4" evidence="31">
    <location>
        <begin position="2650"/>
        <end position="2750"/>
    </location>
</feature>
<feature type="region of interest" description="HD2">
    <location>
        <begin position="2752"/>
        <end position="3135"/>
    </location>
</feature>
<feature type="region of interest" description="HD3">
    <location>
        <begin position="3558"/>
        <end position="3775"/>
    </location>
</feature>
<feature type="region of interest" description="RdRp Fingers N-ter" evidence="15">
    <location>
        <begin position="4732"/>
        <end position="4946"/>
    </location>
</feature>
<feature type="region of interest" description="RdRp Palm N-ter" evidence="15">
    <location>
        <begin position="4947"/>
        <end position="4985"/>
    </location>
</feature>
<feature type="region of interest" description="RdRp Fingers C-ter" evidence="15">
    <location>
        <begin position="4986"/>
        <end position="5044"/>
    </location>
</feature>
<feature type="region of interest" description="RdRp Palm C-ter" evidence="15">
    <location>
        <begin position="5045"/>
        <end position="5180"/>
    </location>
</feature>
<feature type="region of interest" description="RdRp Thumb" evidence="15">
    <location>
        <begin position="5181"/>
        <end position="5297"/>
    </location>
</feature>
<feature type="region of interest" description="GpppA-binding" evidence="21">
    <location>
        <begin position="6308"/>
        <end position="6322"/>
    </location>
</feature>
<feature type="compositionally biased region" description="Acidic residues" evidence="35">
    <location>
        <begin position="972"/>
        <end position="986"/>
    </location>
</feature>
<feature type="active site" description="For PL1-PRO activity" evidence="6">
    <location>
        <position position="1074"/>
    </location>
</feature>
<feature type="active site" description="For PL1-PRO activity" evidence="6">
    <location>
        <position position="1225"/>
    </location>
</feature>
<feature type="active site" description="For PL1-PRO activity" evidence="6">
    <location>
        <position position="1236"/>
    </location>
</feature>
<feature type="active site" description="For PL2-PRO activity" evidence="6">
    <location>
        <position position="1671"/>
    </location>
</feature>
<feature type="active site" description="For PL2-PRO activity" evidence="6">
    <location>
        <position position="1828"/>
    </location>
</feature>
<feature type="active site" description="For PL2-PRO activity" evidence="6">
    <location>
        <position position="1842"/>
    </location>
</feature>
<feature type="active site" description="For 3CL-PRO activity" evidence="9">
    <location>
        <position position="3287"/>
    </location>
</feature>
<feature type="active site" description="For 3CL-PRO activity" evidence="9">
    <location>
        <position position="3391"/>
    </location>
</feature>
<feature type="active site" evidence="15">
    <location>
        <position position="5124"/>
    </location>
</feature>
<feature type="active site" evidence="15">
    <location>
        <position position="5125"/>
    </location>
</feature>
<feature type="active site" evidence="15">
    <location>
        <position position="5126"/>
    </location>
</feature>
<feature type="active site" evidence="20">
    <location>
        <position position="5989"/>
    </location>
</feature>
<feature type="active site" evidence="20">
    <location>
        <position position="5991"/>
    </location>
</feature>
<feature type="active site" evidence="20">
    <location>
        <position position="6090"/>
    </location>
</feature>
<feature type="active site" evidence="20">
    <location>
        <position position="6167"/>
    </location>
</feature>
<feature type="active site" evidence="20">
    <location>
        <position position="6172"/>
    </location>
</feature>
<feature type="active site" evidence="23">
    <location>
        <position position="6683"/>
    </location>
</feature>
<feature type="active site" evidence="23">
    <location>
        <position position="6698"/>
    </location>
</feature>
<feature type="active site" evidence="23">
    <location>
        <position position="6738"/>
    </location>
</feature>
<feature type="active site" evidence="22">
    <location>
        <position position="6841"/>
    </location>
</feature>
<feature type="active site" evidence="22">
    <location>
        <position position="6925"/>
    </location>
</feature>
<feature type="active site" evidence="22">
    <location>
        <position position="6965"/>
    </location>
</feature>
<feature type="active site" evidence="22">
    <location>
        <position position="6998"/>
    </location>
</feature>
<feature type="binding site" evidence="28">
    <location>
        <position position="392"/>
    </location>
    <ligand>
        <name>Zn(2+)</name>
        <dbReference type="ChEBI" id="CHEBI:29105"/>
        <label>1</label>
    </ligand>
</feature>
<feature type="binding site" evidence="28">
    <location>
        <position position="397"/>
    </location>
    <ligand>
        <name>Zn(2+)</name>
        <dbReference type="ChEBI" id="CHEBI:29105"/>
        <label>1</label>
    </ligand>
</feature>
<feature type="binding site" evidence="28">
    <location>
        <position position="413"/>
    </location>
    <ligand>
        <name>Zn(2+)</name>
        <dbReference type="ChEBI" id="CHEBI:29105"/>
        <label>1</label>
    </ligand>
</feature>
<feature type="binding site" evidence="28">
    <location>
        <position position="416"/>
    </location>
    <ligand>
        <name>Zn(2+)</name>
        <dbReference type="ChEBI" id="CHEBI:29105"/>
        <label>1</label>
    </ligand>
</feature>
<feature type="binding site" evidence="6">
    <location>
        <position position="1151"/>
    </location>
    <ligand>
        <name>Zn(2+)</name>
        <dbReference type="ChEBI" id="CHEBI:29105"/>
        <label>2</label>
    </ligand>
</feature>
<feature type="binding site" evidence="6">
    <location>
        <position position="1154"/>
    </location>
    <ligand>
        <name>Zn(2+)</name>
        <dbReference type="ChEBI" id="CHEBI:29105"/>
        <label>2</label>
    </ligand>
</feature>
<feature type="binding site" evidence="6">
    <location>
        <position position="1177"/>
    </location>
    <ligand>
        <name>Zn(2+)</name>
        <dbReference type="ChEBI" id="CHEBI:29105"/>
        <label>2</label>
    </ligand>
</feature>
<feature type="binding site" evidence="6">
    <location>
        <position position="1179"/>
    </location>
    <ligand>
        <name>Zn(2+)</name>
        <dbReference type="ChEBI" id="CHEBI:29105"/>
        <label>2</label>
    </ligand>
</feature>
<feature type="binding site" evidence="6">
    <location>
        <position position="1749"/>
    </location>
    <ligand>
        <name>Zn(2+)</name>
        <dbReference type="ChEBI" id="CHEBI:29105"/>
        <label>3</label>
    </ligand>
</feature>
<feature type="binding site" evidence="6">
    <location>
        <position position="1751"/>
    </location>
    <ligand>
        <name>Zn(2+)</name>
        <dbReference type="ChEBI" id="CHEBI:29105"/>
        <label>3</label>
    </ligand>
</feature>
<feature type="binding site" evidence="6">
    <location>
        <position position="1783"/>
    </location>
    <ligand>
        <name>Zn(2+)</name>
        <dbReference type="ChEBI" id="CHEBI:29105"/>
        <label>3</label>
    </ligand>
</feature>
<feature type="binding site" evidence="6">
    <location>
        <position position="1785"/>
    </location>
    <ligand>
        <name>Zn(2+)</name>
        <dbReference type="ChEBI" id="CHEBI:29105"/>
        <label>3</label>
    </ligand>
</feature>
<feature type="binding site" evidence="31">
    <location>
        <position position="2387"/>
    </location>
    <ligand>
        <name>Zn(2+)</name>
        <dbReference type="ChEBI" id="CHEBI:29105"/>
        <label>4</label>
    </ligand>
</feature>
<feature type="binding site" evidence="31">
    <location>
        <position position="2392"/>
    </location>
    <ligand>
        <name>Zn(2+)</name>
        <dbReference type="ChEBI" id="CHEBI:29105"/>
        <label>4</label>
    </ligand>
</feature>
<feature type="binding site" evidence="31">
    <location>
        <position position="2397"/>
    </location>
    <ligand>
        <name>Zn(2+)</name>
        <dbReference type="ChEBI" id="CHEBI:29105"/>
        <label>4</label>
    </ligand>
</feature>
<feature type="binding site" evidence="31">
    <location>
        <position position="2400"/>
    </location>
    <ligand>
        <name>Zn(2+)</name>
        <dbReference type="ChEBI" id="CHEBI:29105"/>
        <label>4</label>
    </ligand>
</feature>
<feature type="binding site" evidence="31">
    <location>
        <position position="2433"/>
    </location>
    <ligand>
        <name>Zn(2+)</name>
        <dbReference type="ChEBI" id="CHEBI:29105"/>
        <label>5</label>
    </ligand>
</feature>
<feature type="binding site" evidence="31">
    <location>
        <position position="2436"/>
    </location>
    <ligand>
        <name>Zn(2+)</name>
        <dbReference type="ChEBI" id="CHEBI:29105"/>
        <label>5</label>
    </ligand>
</feature>
<feature type="binding site" evidence="31">
    <location>
        <position position="2440"/>
    </location>
    <ligand>
        <name>Zn(2+)</name>
        <dbReference type="ChEBI" id="CHEBI:29105"/>
        <label>5</label>
    </ligand>
</feature>
<feature type="binding site" evidence="31">
    <location>
        <position position="2443"/>
    </location>
    <ligand>
        <name>Zn(2+)</name>
        <dbReference type="ChEBI" id="CHEBI:29105"/>
        <label>5</label>
    </ligand>
</feature>
<feature type="binding site" evidence="19">
    <location>
        <position position="4306"/>
    </location>
    <ligand>
        <name>Zn(2+)</name>
        <dbReference type="ChEBI" id="CHEBI:29105"/>
        <label>6</label>
    </ligand>
</feature>
<feature type="binding site" evidence="19">
    <location>
        <position position="4309"/>
    </location>
    <ligand>
        <name>Zn(2+)</name>
        <dbReference type="ChEBI" id="CHEBI:29105"/>
        <label>6</label>
    </ligand>
</feature>
<feature type="binding site" evidence="19">
    <location>
        <position position="4315"/>
    </location>
    <ligand>
        <name>Zn(2+)</name>
        <dbReference type="ChEBI" id="CHEBI:29105"/>
        <label>6</label>
    </ligand>
</feature>
<feature type="binding site" evidence="19">
    <location>
        <position position="4322"/>
    </location>
    <ligand>
        <name>Zn(2+)</name>
        <dbReference type="ChEBI" id="CHEBI:29105"/>
        <label>6</label>
    </ligand>
</feature>
<feature type="binding site" evidence="19">
    <location>
        <position position="4348"/>
    </location>
    <ligand>
        <name>Zn(2+)</name>
        <dbReference type="ChEBI" id="CHEBI:29105"/>
        <label>7</label>
    </ligand>
</feature>
<feature type="binding site" evidence="19">
    <location>
        <position position="4351"/>
    </location>
    <ligand>
        <name>Zn(2+)</name>
        <dbReference type="ChEBI" id="CHEBI:29105"/>
        <label>7</label>
    </ligand>
</feature>
<feature type="binding site" evidence="19">
    <location>
        <position position="4359"/>
    </location>
    <ligand>
        <name>Zn(2+)</name>
        <dbReference type="ChEBI" id="CHEBI:29105"/>
        <label>7</label>
    </ligand>
</feature>
<feature type="binding site" evidence="19">
    <location>
        <position position="4361"/>
    </location>
    <ligand>
        <name>Zn(2+)</name>
        <dbReference type="ChEBI" id="CHEBI:29105"/>
        <label>7</label>
    </ligand>
</feature>
<feature type="binding site" evidence="3">
    <location>
        <position position="4578"/>
    </location>
    <ligand>
        <name>Mn(2+)</name>
        <dbReference type="ChEBI" id="CHEBI:29035"/>
    </ligand>
</feature>
<feature type="binding site" evidence="3">
    <location>
        <position position="4587"/>
    </location>
    <ligand>
        <name>Mn(2+)</name>
        <dbReference type="ChEBI" id="CHEBI:29035"/>
    </ligand>
</feature>
<feature type="binding site" evidence="34">
    <location>
        <position position="4660"/>
    </location>
    <ligand>
        <name>Zn(2+)</name>
        <dbReference type="ChEBI" id="CHEBI:29105"/>
        <label>8</label>
    </ligand>
</feature>
<feature type="binding site" evidence="34">
    <location>
        <position position="4666"/>
    </location>
    <ligand>
        <name>Zn(2+)</name>
        <dbReference type="ChEBI" id="CHEBI:29105"/>
        <label>8</label>
    </ligand>
</feature>
<feature type="binding site" evidence="34">
    <location>
        <position position="4671"/>
    </location>
    <ligand>
        <name>Zn(2+)</name>
        <dbReference type="ChEBI" id="CHEBI:29105"/>
        <label>8</label>
    </ligand>
</feature>
<feature type="binding site" evidence="34">
    <location>
        <position position="4675"/>
    </location>
    <ligand>
        <name>Zn(2+)</name>
        <dbReference type="ChEBI" id="CHEBI:29105"/>
        <label>8</label>
    </ligand>
</feature>
<feature type="binding site" evidence="15">
    <location>
        <position position="4852"/>
    </location>
    <ligand>
        <name>Zn(2+)</name>
        <dbReference type="ChEBI" id="CHEBI:29105"/>
        <label>9</label>
    </ligand>
</feature>
<feature type="binding site" evidence="15">
    <location>
        <position position="5007"/>
    </location>
    <ligand>
        <name>Zn(2+)</name>
        <dbReference type="ChEBI" id="CHEBI:29105"/>
        <label>9</label>
    </ligand>
</feature>
<feature type="binding site" evidence="15">
    <location>
        <position position="5010"/>
    </location>
    <ligand>
        <name>Zn(2+)</name>
        <dbReference type="ChEBI" id="CHEBI:29105"/>
        <label>9</label>
    </ligand>
</feature>
<feature type="binding site" evidence="15">
    <location>
        <position position="5011"/>
    </location>
    <ligand>
        <name>Zn(2+)</name>
        <dbReference type="ChEBI" id="CHEBI:29105"/>
        <label>9</label>
    </ligand>
</feature>
<feature type="binding site" evidence="10">
    <location>
        <position position="5302"/>
    </location>
    <ligand>
        <name>Zn(2+)</name>
        <dbReference type="ChEBI" id="CHEBI:29105"/>
        <label>10</label>
    </ligand>
</feature>
<feature type="binding site" evidence="10">
    <location>
        <position position="5305"/>
    </location>
    <ligand>
        <name>Zn(2+)</name>
        <dbReference type="ChEBI" id="CHEBI:29105"/>
        <label>10</label>
    </ligand>
</feature>
<feature type="binding site" evidence="10">
    <location>
        <position position="5313"/>
    </location>
    <ligand>
        <name>Zn(2+)</name>
        <dbReference type="ChEBI" id="CHEBI:29105"/>
        <label>11</label>
    </ligand>
</feature>
<feature type="binding site" evidence="10">
    <location>
        <position position="5316"/>
    </location>
    <ligand>
        <name>Zn(2+)</name>
        <dbReference type="ChEBI" id="CHEBI:29105"/>
        <label>11</label>
    </ligand>
</feature>
<feature type="binding site" evidence="10">
    <location>
        <position position="5323"/>
    </location>
    <ligand>
        <name>Zn(2+)</name>
        <dbReference type="ChEBI" id="CHEBI:29105"/>
        <label>10</label>
    </ligand>
</feature>
<feature type="binding site" evidence="10">
    <location>
        <position position="5326"/>
    </location>
    <ligand>
        <name>Zn(2+)</name>
        <dbReference type="ChEBI" id="CHEBI:29105"/>
        <label>10</label>
    </ligand>
</feature>
<feature type="binding site" evidence="10">
    <location>
        <position position="5330"/>
    </location>
    <ligand>
        <name>Zn(2+)</name>
        <dbReference type="ChEBI" id="CHEBI:29105"/>
        <label>11</label>
    </ligand>
</feature>
<feature type="binding site" evidence="10">
    <location>
        <position position="5336"/>
    </location>
    <ligand>
        <name>Zn(2+)</name>
        <dbReference type="ChEBI" id="CHEBI:29105"/>
        <label>11</label>
    </ligand>
</feature>
<feature type="binding site" evidence="10">
    <location>
        <position position="5347"/>
    </location>
    <ligand>
        <name>Zn(2+)</name>
        <dbReference type="ChEBI" id="CHEBI:29105"/>
        <label>12</label>
    </ligand>
</feature>
<feature type="binding site" evidence="10">
    <location>
        <position position="5352"/>
    </location>
    <ligand>
        <name>Zn(2+)</name>
        <dbReference type="ChEBI" id="CHEBI:29105"/>
        <label>12</label>
    </ligand>
</feature>
<feature type="binding site" evidence="10">
    <location>
        <position position="5369"/>
    </location>
    <ligand>
        <name>Zn(2+)</name>
        <dbReference type="ChEBI" id="CHEBI:29105"/>
        <label>12</label>
    </ligand>
</feature>
<feature type="binding site" evidence="10">
    <location>
        <position position="5372"/>
    </location>
    <ligand>
        <name>Zn(2+)</name>
        <dbReference type="ChEBI" id="CHEBI:29105"/>
        <label>12</label>
    </ligand>
</feature>
<feature type="binding site" evidence="1">
    <location>
        <begin position="5578"/>
        <end position="5585"/>
    </location>
    <ligand>
        <name>ATP</name>
        <dbReference type="ChEBI" id="CHEBI:30616"/>
    </ligand>
</feature>
<feature type="binding site" evidence="20">
    <location>
        <position position="6106"/>
    </location>
    <ligand>
        <name>Zn(2+)</name>
        <dbReference type="ChEBI" id="CHEBI:29105"/>
        <label>13</label>
    </ligand>
</feature>
<feature type="binding site" evidence="20">
    <location>
        <position position="6109"/>
    </location>
    <ligand>
        <name>Zn(2+)</name>
        <dbReference type="ChEBI" id="CHEBI:29105"/>
        <label>13</label>
    </ligand>
</feature>
<feature type="binding site" evidence="20">
    <location>
        <position position="6125"/>
    </location>
    <ligand>
        <name>Zn(2+)</name>
        <dbReference type="ChEBI" id="CHEBI:29105"/>
        <label>13</label>
    </ligand>
</feature>
<feature type="binding site" evidence="20">
    <location>
        <position position="6128"/>
    </location>
    <ligand>
        <name>Zn(2+)</name>
        <dbReference type="ChEBI" id="CHEBI:29105"/>
        <label>13</label>
    </ligand>
</feature>
<feature type="binding site" evidence="20">
    <location>
        <position position="6156"/>
    </location>
    <ligand>
        <name>Zn(2+)</name>
        <dbReference type="ChEBI" id="CHEBI:29105"/>
        <label>14</label>
    </ligand>
</feature>
<feature type="binding site" evidence="20">
    <location>
        <position position="6160"/>
    </location>
    <ligand>
        <name>Zn(2+)</name>
        <dbReference type="ChEBI" id="CHEBI:29105"/>
        <label>14</label>
    </ligand>
</feature>
<feature type="binding site" evidence="20">
    <location>
        <position position="6163"/>
    </location>
    <ligand>
        <name>Zn(2+)</name>
        <dbReference type="ChEBI" id="CHEBI:29105"/>
        <label>14</label>
    </ligand>
</feature>
<feature type="binding site" evidence="20">
    <location>
        <position position="6178"/>
    </location>
    <ligand>
        <name>Zn(2+)</name>
        <dbReference type="ChEBI" id="CHEBI:29105"/>
        <label>14</label>
    </ligand>
</feature>
<feature type="binding site" evidence="21">
    <location>
        <begin position="6230"/>
        <end position="6236"/>
    </location>
    <ligand>
        <name>S-adenosyl-L-methionine</name>
        <dbReference type="ChEBI" id="CHEBI:59789"/>
    </ligand>
</feature>
<feature type="binding site" evidence="21">
    <location>
        <position position="6346"/>
    </location>
    <ligand>
        <name>Zn(2+)</name>
        <dbReference type="ChEBI" id="CHEBI:29105"/>
        <label>15</label>
    </ligand>
</feature>
<feature type="binding site" evidence="21">
    <location>
        <position position="6367"/>
    </location>
    <ligand>
        <name>Zn(2+)</name>
        <dbReference type="ChEBI" id="CHEBI:29105"/>
        <label>15</label>
    </ligand>
</feature>
<feature type="binding site" evidence="21">
    <location>
        <position position="6378"/>
    </location>
    <ligand>
        <name>Zn(2+)</name>
        <dbReference type="ChEBI" id="CHEBI:29105"/>
        <label>15</label>
    </ligand>
</feature>
<feature type="binding site" evidence="21">
    <location>
        <position position="6381"/>
    </location>
    <ligand>
        <name>Zn(2+)</name>
        <dbReference type="ChEBI" id="CHEBI:29105"/>
        <label>15</label>
    </ligand>
</feature>
<feature type="site" description="Cleavage; by PL1-PRO" evidence="1">
    <location>
        <begin position="246"/>
        <end position="247"/>
    </location>
</feature>
<feature type="site" description="Cleavage; by PL1-PRO" evidence="1">
    <location>
        <begin position="851"/>
        <end position="852"/>
    </location>
</feature>
<feature type="site" description="Cleavage; by PL2-PRO" evidence="1">
    <location>
        <begin position="2750"/>
        <end position="2751"/>
    </location>
</feature>
<feature type="site" description="Cleavage; by 3CL-PRO" evidence="1">
    <location>
        <begin position="3246"/>
        <end position="3247"/>
    </location>
</feature>
<feature type="site" description="Cleavage; by 3CL-PRO" evidence="1">
    <location>
        <begin position="3549"/>
        <end position="3550"/>
    </location>
</feature>
<feature type="site" description="Cleavage; by 3CL-PRO" evidence="1">
    <location>
        <begin position="3836"/>
        <end position="3837"/>
    </location>
</feature>
<feature type="site" description="Cleavage; by 3CL-PRO" evidence="1">
    <location>
        <begin position="3925"/>
        <end position="3926"/>
    </location>
</feature>
<feature type="site" description="Cleavage; by 3CL-PRO" evidence="1">
    <location>
        <begin position="4122"/>
        <end position="4123"/>
    </location>
</feature>
<feature type="site" description="Cleavage; by 3CL-PRO" evidence="1">
    <location>
        <begin position="4232"/>
        <end position="4233"/>
    </location>
</feature>
<feature type="site" description="Cleavage; by 3CL-PRO" evidence="1">
    <location>
        <begin position="4369"/>
        <end position="4370"/>
    </location>
</feature>
<feature type="site" description="Cleavage; by 3CL-PRO" evidence="1">
    <location>
        <begin position="5297"/>
        <end position="5298"/>
    </location>
</feature>
<feature type="site" description="Cleavage; by 3CL-PRO" evidence="1">
    <location>
        <begin position="5900"/>
        <end position="5901"/>
    </location>
</feature>
<feature type="site" description="Cleavage; by 3CL-PRO" evidence="1">
    <location>
        <begin position="6421"/>
        <end position="6422"/>
    </location>
</feature>
<feature type="site" description="Cleavage; by 3CL-PRO" evidence="1">
    <location>
        <begin position="6795"/>
        <end position="6796"/>
    </location>
</feature>
<feature type="disulfide bond" evidence="32">
    <location>
        <begin position="2251"/>
        <end position="2275"/>
    </location>
</feature>
<feature type="disulfide bond" evidence="32">
    <location>
        <begin position="2266"/>
        <end position="2272"/>
    </location>
</feature>
<feature type="sequence conflict" description="In Ref. 3; AAD32989." evidence="36" ref="3">
    <original>Y</original>
    <variation>C</variation>
    <location>
        <position position="5024"/>
    </location>
</feature>
<organismHost>
    <name type="scientific">Bos taurus</name>
    <name type="common">Bovine</name>
    <dbReference type="NCBI Taxonomy" id="9913"/>
</organismHost>
<organism>
    <name type="scientific">Bovine coronavirus (strain Mebus)</name>
    <name type="common">BCoV</name>
    <name type="synonym">BCV</name>
    <dbReference type="NCBI Taxonomy" id="11132"/>
    <lineage>
        <taxon>Viruses</taxon>
        <taxon>Riboviria</taxon>
        <taxon>Orthornavirae</taxon>
        <taxon>Pisuviricota</taxon>
        <taxon>Pisoniviricetes</taxon>
        <taxon>Nidovirales</taxon>
        <taxon>Cornidovirineae</taxon>
        <taxon>Coronaviridae</taxon>
        <taxon>Orthocoronavirinae</taxon>
        <taxon>Betacoronavirus</taxon>
        <taxon>Embecovirus</taxon>
        <taxon>Betacoronavirus 1</taxon>
    </lineage>
</organism>
<reference key="1">
    <citation type="submission" date="1993-08" db="EMBL/GenBank/DDBJ databases">
        <authorList>
            <person name="Brian D.A."/>
        </authorList>
    </citation>
    <scope>NUCLEOTIDE SEQUENCE [GENOMIC RNA]</scope>
</reference>
<reference key="2">
    <citation type="submission" date="2003-04" db="EMBL/GenBank/DDBJ databases">
        <authorList>
            <person name="Brian D.A."/>
        </authorList>
    </citation>
    <scope>SEQUENCE REVISION</scope>
</reference>
<reference key="3">
    <citation type="journal article" date="1999" name="Virus Res.">
        <title>Phylogenetic analysis of a highly conserved region of the polymerase gene from 11 coronaviruses and development of a consensus polymerase chain reaction assay.</title>
        <authorList>
            <person name="Stephensen C.B."/>
            <person name="Casebolt D.B."/>
            <person name="Gangopadhyay N.N."/>
        </authorList>
    </citation>
    <scope>NUCLEOTIDE SEQUENCE [GENOMIC RNA] OF 4871-5177</scope>
</reference>
<evidence type="ECO:0000250" key="1"/>
<evidence type="ECO:0000250" key="2">
    <source>
        <dbReference type="UniProtKB" id="P0C6X7"/>
    </source>
</evidence>
<evidence type="ECO:0000250" key="3">
    <source>
        <dbReference type="UniProtKB" id="P0DTD1"/>
    </source>
</evidence>
<evidence type="ECO:0000255" key="4"/>
<evidence type="ECO:0000255" key="5">
    <source>
        <dbReference type="PROSITE-ProRule" id="PRU00214"/>
    </source>
</evidence>
<evidence type="ECO:0000255" key="6">
    <source>
        <dbReference type="PROSITE-ProRule" id="PRU00444"/>
    </source>
</evidence>
<evidence type="ECO:0000255" key="7">
    <source>
        <dbReference type="PROSITE-ProRule" id="PRU00490"/>
    </source>
</evidence>
<evidence type="ECO:0000255" key="8">
    <source>
        <dbReference type="PROSITE-ProRule" id="PRU00539"/>
    </source>
</evidence>
<evidence type="ECO:0000255" key="9">
    <source>
        <dbReference type="PROSITE-ProRule" id="PRU00772"/>
    </source>
</evidence>
<evidence type="ECO:0000255" key="10">
    <source>
        <dbReference type="PROSITE-ProRule" id="PRU00986"/>
    </source>
</evidence>
<evidence type="ECO:0000255" key="11">
    <source>
        <dbReference type="PROSITE-ProRule" id="PRU01289"/>
    </source>
</evidence>
<evidence type="ECO:0000255" key="12">
    <source>
        <dbReference type="PROSITE-ProRule" id="PRU01290"/>
    </source>
</evidence>
<evidence type="ECO:0000255" key="13">
    <source>
        <dbReference type="PROSITE-ProRule" id="PRU01291"/>
    </source>
</evidence>
<evidence type="ECO:0000255" key="14">
    <source>
        <dbReference type="PROSITE-ProRule" id="PRU01292"/>
    </source>
</evidence>
<evidence type="ECO:0000255" key="15">
    <source>
        <dbReference type="PROSITE-ProRule" id="PRU01293"/>
    </source>
</evidence>
<evidence type="ECO:0000255" key="16">
    <source>
        <dbReference type="PROSITE-ProRule" id="PRU01294"/>
    </source>
</evidence>
<evidence type="ECO:0000255" key="17">
    <source>
        <dbReference type="PROSITE-ProRule" id="PRU01295"/>
    </source>
</evidence>
<evidence type="ECO:0000255" key="18">
    <source>
        <dbReference type="PROSITE-ProRule" id="PRU01296"/>
    </source>
</evidence>
<evidence type="ECO:0000255" key="19">
    <source>
        <dbReference type="PROSITE-ProRule" id="PRU01297"/>
    </source>
</evidence>
<evidence type="ECO:0000255" key="20">
    <source>
        <dbReference type="PROSITE-ProRule" id="PRU01298"/>
    </source>
</evidence>
<evidence type="ECO:0000255" key="21">
    <source>
        <dbReference type="PROSITE-ProRule" id="PRU01299"/>
    </source>
</evidence>
<evidence type="ECO:0000255" key="22">
    <source>
        <dbReference type="PROSITE-ProRule" id="PRU01300"/>
    </source>
</evidence>
<evidence type="ECO:0000255" key="23">
    <source>
        <dbReference type="PROSITE-ProRule" id="PRU01303"/>
    </source>
</evidence>
<evidence type="ECO:0000255" key="24">
    <source>
        <dbReference type="PROSITE-ProRule" id="PRU01305"/>
    </source>
</evidence>
<evidence type="ECO:0000255" key="25">
    <source>
        <dbReference type="PROSITE-ProRule" id="PRU01306"/>
    </source>
</evidence>
<evidence type="ECO:0000255" key="26">
    <source>
        <dbReference type="PROSITE-ProRule" id="PRU01307"/>
    </source>
</evidence>
<evidence type="ECO:0000255" key="27">
    <source>
        <dbReference type="PROSITE-ProRule" id="PRU01308"/>
    </source>
</evidence>
<evidence type="ECO:0000255" key="28">
    <source>
        <dbReference type="PROSITE-ProRule" id="PRU01333"/>
    </source>
</evidence>
<evidence type="ECO:0000255" key="29">
    <source>
        <dbReference type="PROSITE-ProRule" id="PRU01334"/>
    </source>
</evidence>
<evidence type="ECO:0000255" key="30">
    <source>
        <dbReference type="PROSITE-ProRule" id="PRU01335"/>
    </source>
</evidence>
<evidence type="ECO:0000255" key="31">
    <source>
        <dbReference type="PROSITE-ProRule" id="PRU01336"/>
    </source>
</evidence>
<evidence type="ECO:0000255" key="32">
    <source>
        <dbReference type="PROSITE-ProRule" id="PRU01337"/>
    </source>
</evidence>
<evidence type="ECO:0000255" key="33">
    <source>
        <dbReference type="PROSITE-ProRule" id="PRU01338"/>
    </source>
</evidence>
<evidence type="ECO:0000255" key="34">
    <source>
        <dbReference type="PROSITE-ProRule" id="PRU01344"/>
    </source>
</evidence>
<evidence type="ECO:0000256" key="35">
    <source>
        <dbReference type="SAM" id="MobiDB-lite"/>
    </source>
</evidence>
<evidence type="ECO:0000305" key="36"/>
<gene>
    <name type="primary">rep</name>
    <name type="ORF">1a-1b</name>
</gene>
<keyword id="KW-1072">Activation of host autophagy by virus</keyword>
<keyword id="KW-0067">ATP-binding</keyword>
<keyword id="KW-1132">Decay of host mRNAs by virus</keyword>
<keyword id="KW-1015">Disulfide bond</keyword>
<keyword id="KW-0255">Endonuclease</keyword>
<keyword id="KW-1262">Eukaryotic host gene expression shutoff by virus</keyword>
<keyword id="KW-1193">Eukaryotic host translation shutoff by virus</keyword>
<keyword id="KW-0269">Exonuclease</keyword>
<keyword id="KW-0347">Helicase</keyword>
<keyword id="KW-1035">Host cytoplasm</keyword>
<keyword id="KW-1190">Host gene expression shutoff by virus</keyword>
<keyword id="KW-1043">Host membrane</keyword>
<keyword id="KW-1192">Host mRNA suppression by virus</keyword>
<keyword id="KW-0945">Host-virus interaction</keyword>
<keyword id="KW-0378">Hydrolase</keyword>
<keyword id="KW-1090">Inhibition of host innate immune response by virus</keyword>
<keyword id="KW-1114">Inhibition of host interferon signaling pathway by virus</keyword>
<keyword id="KW-1095">Inhibition of host ISG15 by virus</keyword>
<keyword id="KW-1100">Inhibition of host NF-kappa-B by virus</keyword>
<keyword id="KW-0922">Interferon antiviral system evasion</keyword>
<keyword id="KW-0456">Lyase</keyword>
<keyword id="KW-0464">Manganese</keyword>
<keyword id="KW-0472">Membrane</keyword>
<keyword id="KW-0479">Metal-binding</keyword>
<keyword id="KW-0489">Methyltransferase</keyword>
<keyword id="KW-1127">Modulation of host ubiquitin pathway by viral deubiquitinase</keyword>
<keyword id="KW-1130">Modulation of host ubiquitin pathway by virus</keyword>
<keyword id="KW-0540">Nuclease</keyword>
<keyword id="KW-0547">Nucleotide-binding</keyword>
<keyword id="KW-0548">Nucleotidyltransferase</keyword>
<keyword id="KW-0645">Protease</keyword>
<keyword id="KW-0677">Repeat</keyword>
<keyword id="KW-0688">Ribosomal frameshifting</keyword>
<keyword id="KW-0694">RNA-binding</keyword>
<keyword id="KW-0696">RNA-directed RNA polymerase</keyword>
<keyword id="KW-0788">Thiol protease</keyword>
<keyword id="KW-0808">Transferase</keyword>
<keyword id="KW-0812">Transmembrane</keyword>
<keyword id="KW-1133">Transmembrane helix</keyword>
<keyword id="KW-0833">Ubl conjugation pathway</keyword>
<keyword id="KW-0899">Viral immunoevasion</keyword>
<keyword id="KW-0693">Viral RNA replication</keyword>
<keyword id="KW-0862">Zinc</keyword>
<keyword id="KW-0863">Zinc-finger</keyword>
<dbReference type="EC" id="3.4.19.12"/>
<dbReference type="EC" id="3.4.22.-"/>
<dbReference type="EC" id="2.7.7.48"/>
<dbReference type="EC" id="2.7.7.50"/>
<dbReference type="EC" id="3.6.4.12"/>
<dbReference type="EC" id="3.6.4.13"/>
<dbReference type="EC" id="2.1.1.56"/>
<dbReference type="EC" id="3.1.13.-"/>
<dbReference type="EC" id="4.6.1.-"/>
<dbReference type="EC" id="2.1.1.57"/>
<dbReference type="EMBL" id="U00735">
    <property type="protein sequence ID" value="AAA64744.2"/>
    <property type="molecule type" value="Genomic_RNA"/>
</dbReference>
<dbReference type="EMBL" id="AF124985">
    <property type="protein sequence ID" value="AAD32989.1"/>
    <property type="molecule type" value="Genomic_RNA"/>
</dbReference>
<dbReference type="SMR" id="P0C6W9"/>
<dbReference type="Proteomes" id="UP000007554">
    <property type="component" value="Genome"/>
</dbReference>
<dbReference type="GO" id="GO:0044172">
    <property type="term" value="C:host cell endoplasmic reticulum-Golgi intermediate compartment"/>
    <property type="evidence" value="ECO:0007669"/>
    <property type="project" value="UniProtKB-SubCell"/>
</dbReference>
<dbReference type="GO" id="GO:0033644">
    <property type="term" value="C:host cell membrane"/>
    <property type="evidence" value="ECO:0007669"/>
    <property type="project" value="UniProtKB-SubCell"/>
</dbReference>
<dbReference type="GO" id="GO:0044220">
    <property type="term" value="C:host cell perinuclear region of cytoplasm"/>
    <property type="evidence" value="ECO:0007669"/>
    <property type="project" value="UniProtKB-SubCell"/>
</dbReference>
<dbReference type="GO" id="GO:0016020">
    <property type="term" value="C:membrane"/>
    <property type="evidence" value="ECO:0007669"/>
    <property type="project" value="UniProtKB-KW"/>
</dbReference>
<dbReference type="GO" id="GO:0000175">
    <property type="term" value="F:3'-5'-RNA exonuclease activity"/>
    <property type="evidence" value="ECO:0007669"/>
    <property type="project" value="InterPro"/>
</dbReference>
<dbReference type="GO" id="GO:0043139">
    <property type="term" value="F:5'-3' DNA helicase activity"/>
    <property type="evidence" value="ECO:0007669"/>
    <property type="project" value="TreeGrafter"/>
</dbReference>
<dbReference type="GO" id="GO:0005524">
    <property type="term" value="F:ATP binding"/>
    <property type="evidence" value="ECO:0007669"/>
    <property type="project" value="UniProtKB-KW"/>
</dbReference>
<dbReference type="GO" id="GO:0016887">
    <property type="term" value="F:ATP hydrolysis activity"/>
    <property type="evidence" value="ECO:0007669"/>
    <property type="project" value="RHEA"/>
</dbReference>
<dbReference type="GO" id="GO:0004843">
    <property type="term" value="F:cysteine-type deubiquitinase activity"/>
    <property type="evidence" value="ECO:0007669"/>
    <property type="project" value="UniProtKB-EC"/>
</dbReference>
<dbReference type="GO" id="GO:0004197">
    <property type="term" value="F:cysteine-type endopeptidase activity"/>
    <property type="evidence" value="ECO:0007669"/>
    <property type="project" value="InterPro"/>
</dbReference>
<dbReference type="GO" id="GO:0004519">
    <property type="term" value="F:endonuclease activity"/>
    <property type="evidence" value="ECO:0007669"/>
    <property type="project" value="UniProtKB-KW"/>
</dbReference>
<dbReference type="GO" id="GO:0016829">
    <property type="term" value="F:lyase activity"/>
    <property type="evidence" value="ECO:0007669"/>
    <property type="project" value="UniProtKB-KW"/>
</dbReference>
<dbReference type="GO" id="GO:0004483">
    <property type="term" value="F:mRNA (nucleoside-2'-O-)-methyltransferase activity"/>
    <property type="evidence" value="ECO:0007669"/>
    <property type="project" value="InterPro"/>
</dbReference>
<dbReference type="GO" id="GO:0004482">
    <property type="term" value="F:mRNA 5'-cap (guanine-N7-)-methyltransferase activity"/>
    <property type="evidence" value="ECO:0007669"/>
    <property type="project" value="InterPro"/>
</dbReference>
<dbReference type="GO" id="GO:0008242">
    <property type="term" value="F:omega peptidase activity"/>
    <property type="evidence" value="ECO:0007669"/>
    <property type="project" value="InterPro"/>
</dbReference>
<dbReference type="GO" id="GO:0003724">
    <property type="term" value="F:RNA helicase activity"/>
    <property type="evidence" value="ECO:0007669"/>
    <property type="project" value="UniProtKB-EC"/>
</dbReference>
<dbReference type="GO" id="GO:0003968">
    <property type="term" value="F:RNA-directed RNA polymerase activity"/>
    <property type="evidence" value="ECO:0007669"/>
    <property type="project" value="UniProtKB-KW"/>
</dbReference>
<dbReference type="GO" id="GO:0003727">
    <property type="term" value="F:single-stranded RNA binding"/>
    <property type="evidence" value="ECO:0007669"/>
    <property type="project" value="InterPro"/>
</dbReference>
<dbReference type="GO" id="GO:0008270">
    <property type="term" value="F:zinc ion binding"/>
    <property type="evidence" value="ECO:0007669"/>
    <property type="project" value="UniProtKB-KW"/>
</dbReference>
<dbReference type="GO" id="GO:0006351">
    <property type="term" value="P:DNA-templated transcription"/>
    <property type="evidence" value="ECO:0007669"/>
    <property type="project" value="InterPro"/>
</dbReference>
<dbReference type="GO" id="GO:0006508">
    <property type="term" value="P:proteolysis"/>
    <property type="evidence" value="ECO:0007669"/>
    <property type="project" value="UniProtKB-KW"/>
</dbReference>
<dbReference type="GO" id="GO:0010506">
    <property type="term" value="P:regulation of autophagy"/>
    <property type="evidence" value="ECO:0007669"/>
    <property type="project" value="InterPro"/>
</dbReference>
<dbReference type="GO" id="GO:0039520">
    <property type="term" value="P:symbiont-mediated activation of host autophagy"/>
    <property type="evidence" value="ECO:0007669"/>
    <property type="project" value="UniProtKB-KW"/>
</dbReference>
<dbReference type="GO" id="GO:0039595">
    <property type="term" value="P:symbiont-mediated degradation of host mRNA"/>
    <property type="evidence" value="ECO:0007669"/>
    <property type="project" value="UniProtKB-KW"/>
</dbReference>
<dbReference type="GO" id="GO:0039648">
    <property type="term" value="P:symbiont-mediated perturbation of host ubiquitin-like protein modification"/>
    <property type="evidence" value="ECO:0007669"/>
    <property type="project" value="UniProtKB-KW"/>
</dbReference>
<dbReference type="GO" id="GO:0039657">
    <property type="term" value="P:symbiont-mediated suppression of host gene expression"/>
    <property type="evidence" value="ECO:0007669"/>
    <property type="project" value="UniProtKB-KW"/>
</dbReference>
<dbReference type="GO" id="GO:0039579">
    <property type="term" value="P:symbiont-mediated suppression of host ISG15-protein conjugation"/>
    <property type="evidence" value="ECO:0007669"/>
    <property type="project" value="UniProtKB-KW"/>
</dbReference>
<dbReference type="GO" id="GO:0085034">
    <property type="term" value="P:symbiont-mediated suppression of host NF-kappaB cascade"/>
    <property type="evidence" value="ECO:0007669"/>
    <property type="project" value="UniProtKB-KW"/>
</dbReference>
<dbReference type="GO" id="GO:0039502">
    <property type="term" value="P:symbiont-mediated suppression of host type I interferon-mediated signaling pathway"/>
    <property type="evidence" value="ECO:0007669"/>
    <property type="project" value="UniProtKB-KW"/>
</dbReference>
<dbReference type="GO" id="GO:0019082">
    <property type="term" value="P:viral protein processing"/>
    <property type="evidence" value="ECO:0007669"/>
    <property type="project" value="InterPro"/>
</dbReference>
<dbReference type="GO" id="GO:0039694">
    <property type="term" value="P:viral RNA genome replication"/>
    <property type="evidence" value="ECO:0007669"/>
    <property type="project" value="InterPro"/>
</dbReference>
<dbReference type="GO" id="GO:0075523">
    <property type="term" value="P:viral translational frameshifting"/>
    <property type="evidence" value="ECO:0007669"/>
    <property type="project" value="UniProtKB-KW"/>
</dbReference>
<dbReference type="CDD" id="cd21409">
    <property type="entry name" value="1B_cv_Nsp13-like"/>
    <property type="match status" value="1"/>
</dbReference>
<dbReference type="CDD" id="cd21901">
    <property type="entry name" value="alpha_betaCoV_Nsp10"/>
    <property type="match status" value="1"/>
</dbReference>
<dbReference type="CDD" id="cd21560">
    <property type="entry name" value="betaCoV-Nsp6"/>
    <property type="match status" value="1"/>
</dbReference>
<dbReference type="CDD" id="cd21722">
    <property type="entry name" value="betaCoV_Nsp13-helicase"/>
    <property type="match status" value="1"/>
</dbReference>
<dbReference type="CDD" id="cd21659">
    <property type="entry name" value="betaCoV_Nsp14"/>
    <property type="match status" value="1"/>
</dbReference>
<dbReference type="CDD" id="cd21519">
    <property type="entry name" value="betaCoV_Nsp2_MHV-like"/>
    <property type="match status" value="1"/>
</dbReference>
<dbReference type="CDD" id="cd21827">
    <property type="entry name" value="betaCoV_Nsp7"/>
    <property type="match status" value="1"/>
</dbReference>
<dbReference type="CDD" id="cd21831">
    <property type="entry name" value="betaCoV_Nsp8"/>
    <property type="match status" value="1"/>
</dbReference>
<dbReference type="CDD" id="cd21898">
    <property type="entry name" value="betaCoV_Nsp9"/>
    <property type="match status" value="1"/>
</dbReference>
<dbReference type="CDD" id="cd21732">
    <property type="entry name" value="betaCoV_PLPro"/>
    <property type="match status" value="1"/>
</dbReference>
<dbReference type="CDD" id="cd23528">
    <property type="entry name" value="capping_2-OMTase_betaCoV_Nsp16"/>
    <property type="match status" value="1"/>
</dbReference>
<dbReference type="CDD" id="cd21473">
    <property type="entry name" value="cv_Nsp4_TM"/>
    <property type="match status" value="1"/>
</dbReference>
<dbReference type="CDD" id="cd21524">
    <property type="entry name" value="DPUP_MHV_Nsp3"/>
    <property type="match status" value="1"/>
</dbReference>
<dbReference type="CDD" id="cd21593">
    <property type="entry name" value="HCoV_HKU1-like_RdRp"/>
    <property type="match status" value="1"/>
</dbReference>
<dbReference type="CDD" id="cd21167">
    <property type="entry name" value="M_alpha_beta_cv_Nsp15-like"/>
    <property type="match status" value="1"/>
</dbReference>
<dbReference type="CDD" id="cd21557">
    <property type="entry name" value="Macro_X_Nsp3-like"/>
    <property type="match status" value="1"/>
</dbReference>
<dbReference type="CDD" id="cd21879">
    <property type="entry name" value="MHV-like_Nsp1"/>
    <property type="match status" value="1"/>
</dbReference>
<dbReference type="CDD" id="cd21812">
    <property type="entry name" value="MHV-like_Nsp3_betaSM"/>
    <property type="match status" value="1"/>
</dbReference>
<dbReference type="CDD" id="cd21824">
    <property type="entry name" value="MHV-like_Nsp3_NAB"/>
    <property type="match status" value="1"/>
</dbReference>
<dbReference type="CDD" id="cd21161">
    <property type="entry name" value="NendoU_cv_Nsp15-like"/>
    <property type="match status" value="1"/>
</dbReference>
<dbReference type="CDD" id="cd21171">
    <property type="entry name" value="NTD_alpha_betaCoV_Nsp15-like"/>
    <property type="match status" value="1"/>
</dbReference>
<dbReference type="CDD" id="cd21689">
    <property type="entry name" value="stalk_CoV_Nsp13-like"/>
    <property type="match status" value="1"/>
</dbReference>
<dbReference type="CDD" id="cd21714">
    <property type="entry name" value="TM_Y_MHV-like_Nsp3_C"/>
    <property type="match status" value="1"/>
</dbReference>
<dbReference type="CDD" id="cd21467">
    <property type="entry name" value="Ubl1_cv_Nsp3_N-like"/>
    <property type="match status" value="1"/>
</dbReference>
<dbReference type="CDD" id="cd21401">
    <property type="entry name" value="ZBD_cv_Nsp13-like"/>
    <property type="match status" value="1"/>
</dbReference>
<dbReference type="FunFam" id="1.10.150.420:FF:000001">
    <property type="entry name" value="Replicase polyprotein"/>
    <property type="match status" value="1"/>
</dbReference>
<dbReference type="Gene3D" id="1.10.8.1190">
    <property type="match status" value="2"/>
</dbReference>
<dbReference type="Gene3D" id="2.60.120.1680">
    <property type="match status" value="1"/>
</dbReference>
<dbReference type="Gene3D" id="3.10.20.350">
    <property type="match status" value="1"/>
</dbReference>
<dbReference type="Gene3D" id="3.10.20.540">
    <property type="match status" value="1"/>
</dbReference>
<dbReference type="Gene3D" id="3.40.50.11580">
    <property type="match status" value="1"/>
</dbReference>
<dbReference type="Gene3D" id="6.10.140.2090">
    <property type="match status" value="1"/>
</dbReference>
<dbReference type="Gene3D" id="1.10.150.420">
    <property type="entry name" value="Coronavirus nonstructural protein 4 C-terminus"/>
    <property type="match status" value="1"/>
</dbReference>
<dbReference type="Gene3D" id="3.40.220.10">
    <property type="entry name" value="Leucine Aminopeptidase, subunit E, domain 1"/>
    <property type="match status" value="1"/>
</dbReference>
<dbReference type="Gene3D" id="1.10.1840.10">
    <property type="entry name" value="main proteinase (3clpro) structure, domain 3"/>
    <property type="match status" value="1"/>
</dbReference>
<dbReference type="Gene3D" id="3.30.160.820">
    <property type="entry name" value="Nsp15 N-terminal domain-like"/>
    <property type="match status" value="1"/>
</dbReference>
<dbReference type="Gene3D" id="1.10.8.370">
    <property type="entry name" value="nsp7 replicase"/>
    <property type="match status" value="1"/>
</dbReference>
<dbReference type="Gene3D" id="3.30.70.3540">
    <property type="entry name" value="Nsp8 replicase, head domain"/>
    <property type="match status" value="1"/>
</dbReference>
<dbReference type="Gene3D" id="3.40.50.300">
    <property type="entry name" value="P-loop containing nucleotide triphosphate hydrolases"/>
    <property type="match status" value="2"/>
</dbReference>
<dbReference type="Gene3D" id="2.40.10.250">
    <property type="entry name" value="Replicase NSP9"/>
    <property type="match status" value="1"/>
</dbReference>
<dbReference type="Gene3D" id="3.40.50.11020">
    <property type="entry name" value="Replicase polyprotein, nucleic acid-binding domain"/>
    <property type="match status" value="1"/>
</dbReference>
<dbReference type="Gene3D" id="2.40.10.10">
    <property type="entry name" value="Trypsin-like serine proteases"/>
    <property type="match status" value="2"/>
</dbReference>
<dbReference type="Gene3D" id="3.40.50.150">
    <property type="entry name" value="Vaccinia Virus protein VP39"/>
    <property type="match status" value="1"/>
</dbReference>
<dbReference type="InterPro" id="IPR027351">
    <property type="entry name" value="(+)RNA_virus_helicase_core_dom"/>
</dbReference>
<dbReference type="InterPro" id="IPR046443">
    <property type="entry name" value="a/bCoV_NSP1_glob"/>
</dbReference>
<dbReference type="InterPro" id="IPR046440">
    <property type="entry name" value="AV_NSP11N_COV_NSP15M"/>
</dbReference>
<dbReference type="InterPro" id="IPR022570">
    <property type="entry name" value="B-CoV_A_NSP1"/>
</dbReference>
<dbReference type="InterPro" id="IPR046442">
    <property type="entry name" value="bCoV_NSP1_C"/>
</dbReference>
<dbReference type="InterPro" id="IPR050534">
    <property type="entry name" value="Coronavir_polyprotein_1ab"/>
</dbReference>
<dbReference type="InterPro" id="IPR043608">
    <property type="entry name" value="CoV_NSP15_M"/>
</dbReference>
<dbReference type="InterPro" id="IPR043606">
    <property type="entry name" value="CoV_NSP15_N"/>
</dbReference>
<dbReference type="InterPro" id="IPR043613">
    <property type="entry name" value="CoV_NSP2_C"/>
</dbReference>
<dbReference type="InterPro" id="IPR047573">
    <property type="entry name" value="CoV_NSP2_M"/>
</dbReference>
<dbReference type="InterPro" id="IPR049894">
    <property type="entry name" value="COV_NSP3_3ECTO"/>
</dbReference>
<dbReference type="InterPro" id="IPR043611">
    <property type="entry name" value="CoV_NSP3_C"/>
</dbReference>
<dbReference type="InterPro" id="IPR047566">
    <property type="entry name" value="CoV_NSP3_Y"/>
</dbReference>
<dbReference type="InterPro" id="IPR032505">
    <property type="entry name" value="CoV_NSP4_C"/>
</dbReference>
<dbReference type="InterPro" id="IPR043612">
    <property type="entry name" value="CoV_NSP4_N"/>
</dbReference>
<dbReference type="InterPro" id="IPR043502">
    <property type="entry name" value="DNA/RNA_pol_sf"/>
</dbReference>
<dbReference type="InterPro" id="IPR041679">
    <property type="entry name" value="DNA2/NAM7-like_C"/>
</dbReference>
<dbReference type="InterPro" id="IPR022733">
    <property type="entry name" value="DPUP_SUD_C_bCoV"/>
</dbReference>
<dbReference type="InterPro" id="IPR037227">
    <property type="entry name" value="EndoU-like"/>
</dbReference>
<dbReference type="InterPro" id="IPR002589">
    <property type="entry name" value="Macro_dom"/>
</dbReference>
<dbReference type="InterPro" id="IPR043472">
    <property type="entry name" value="Macro_dom-like"/>
</dbReference>
<dbReference type="InterPro" id="IPR044371">
    <property type="entry name" value="Macro_X_NSP3-like"/>
</dbReference>
<dbReference type="InterPro" id="IPR046435">
    <property type="entry name" value="N7_MTase_CoV"/>
</dbReference>
<dbReference type="InterPro" id="IPR043609">
    <property type="entry name" value="NendoU_nidovirus"/>
</dbReference>
<dbReference type="InterPro" id="IPR044863">
    <property type="entry name" value="NIRAN"/>
</dbReference>
<dbReference type="InterPro" id="IPR046438">
    <property type="entry name" value="NIV_2_O_MTASE"/>
</dbReference>
<dbReference type="InterPro" id="IPR046436">
    <property type="entry name" value="NIV_EXON"/>
</dbReference>
<dbReference type="InterPro" id="IPR036333">
    <property type="entry name" value="NSP10_sf_CoV"/>
</dbReference>
<dbReference type="InterPro" id="IPR047570">
    <property type="entry name" value="NSP12_IF_CoV"/>
</dbReference>
<dbReference type="InterPro" id="IPR044343">
    <property type="entry name" value="NSP13_1B_dom_CoV"/>
</dbReference>
<dbReference type="InterPro" id="IPR048673">
    <property type="entry name" value="NSP13_stalk_CoV"/>
</dbReference>
<dbReference type="InterPro" id="IPR048672">
    <property type="entry name" value="NSP13_ZBD_CoV"/>
</dbReference>
<dbReference type="InterPro" id="IPR027352">
    <property type="entry name" value="NSP13_ZBD_CoV-like"/>
</dbReference>
<dbReference type="InterPro" id="IPR044315">
    <property type="entry name" value="NSP14_betaCoV"/>
</dbReference>
<dbReference type="InterPro" id="IPR009466">
    <property type="entry name" value="NSP14_CoV"/>
</dbReference>
<dbReference type="InterPro" id="IPR044330">
    <property type="entry name" value="NSP15_alpha_betaCoV_N"/>
</dbReference>
<dbReference type="InterPro" id="IPR044322">
    <property type="entry name" value="NSP15_M_alpha_beta_CoV"/>
</dbReference>
<dbReference type="InterPro" id="IPR043174">
    <property type="entry name" value="NSP15_middle_sf"/>
</dbReference>
<dbReference type="InterPro" id="IPR042515">
    <property type="entry name" value="NSP15_N_CoV"/>
</dbReference>
<dbReference type="InterPro" id="IPR044401">
    <property type="entry name" value="NSP15_NendoU_CoV"/>
</dbReference>
<dbReference type="InterPro" id="IPR009461">
    <property type="entry name" value="NSP16_CoV-like"/>
</dbReference>
<dbReference type="InterPro" id="IPR044384">
    <property type="entry name" value="NSP2_MHV-like"/>
</dbReference>
<dbReference type="InterPro" id="IPR043615">
    <property type="entry name" value="NSP2_N_CoV"/>
</dbReference>
<dbReference type="InterPro" id="IPR044381">
    <property type="entry name" value="NSP3_DPUP_MHV"/>
</dbReference>
<dbReference type="InterPro" id="IPR047567">
    <property type="entry name" value="NSP3_G2M_bCoV"/>
</dbReference>
<dbReference type="InterPro" id="IPR032592">
    <property type="entry name" value="NSP3_NAB_bCoV"/>
</dbReference>
<dbReference type="InterPro" id="IPR042570">
    <property type="entry name" value="NSP3_NAB_bCoV_sf"/>
</dbReference>
<dbReference type="InterPro" id="IPR044357">
    <property type="entry name" value="NSP3_Ubl1_dom_CoV"/>
</dbReference>
<dbReference type="InterPro" id="IPR044353">
    <property type="entry name" value="Nsp3_Ubl2_dom_CoV"/>
</dbReference>
<dbReference type="InterPro" id="IPR038083">
    <property type="entry name" value="NSP3A-like"/>
</dbReference>
<dbReference type="InterPro" id="IPR038123">
    <property type="entry name" value="NSP4_C_sf_CoV"/>
</dbReference>
<dbReference type="InterPro" id="IPR044367">
    <property type="entry name" value="NSP6_betaCoV"/>
</dbReference>
<dbReference type="InterPro" id="IPR043610">
    <property type="entry name" value="NSP6_CoV"/>
</dbReference>
<dbReference type="InterPro" id="IPR014828">
    <property type="entry name" value="NSP7_CoV"/>
</dbReference>
<dbReference type="InterPro" id="IPR037204">
    <property type="entry name" value="NSP7_sf_CoV"/>
</dbReference>
<dbReference type="InterPro" id="IPR014829">
    <property type="entry name" value="NSP8_CoV"/>
</dbReference>
<dbReference type="InterPro" id="IPR037230">
    <property type="entry name" value="NSP8_sf_CoV"/>
</dbReference>
<dbReference type="InterPro" id="IPR014822">
    <property type="entry name" value="NSP9_CoV"/>
</dbReference>
<dbReference type="InterPro" id="IPR036499">
    <property type="entry name" value="NSP9_sf_CoV"/>
</dbReference>
<dbReference type="InterPro" id="IPR027417">
    <property type="entry name" value="P-loop_NTPase"/>
</dbReference>
<dbReference type="InterPro" id="IPR002705">
    <property type="entry name" value="Pept_C30/C16_B_coronavir"/>
</dbReference>
<dbReference type="InterPro" id="IPR013016">
    <property type="entry name" value="Peptidase_C16_CoV"/>
</dbReference>
<dbReference type="InterPro" id="IPR008740">
    <property type="entry name" value="Peptidase_C30_CoV"/>
</dbReference>
<dbReference type="InterPro" id="IPR043477">
    <property type="entry name" value="Peptidase_C30_dom3_CoV"/>
</dbReference>
<dbReference type="InterPro" id="IPR009003">
    <property type="entry name" value="Peptidase_S1_PA"/>
</dbReference>
<dbReference type="InterPro" id="IPR043504">
    <property type="entry name" value="Peptidase_S1_PA_chymotrypsin"/>
</dbReference>
<dbReference type="InterPro" id="IPR043177">
    <property type="entry name" value="PLpro_N_sf_CoV"/>
</dbReference>
<dbReference type="InterPro" id="IPR043503">
    <property type="entry name" value="PLpro_palm_finger_dom_CoV"/>
</dbReference>
<dbReference type="InterPro" id="IPR043178">
    <property type="entry name" value="PLpro_thumb_sf_CoV"/>
</dbReference>
<dbReference type="InterPro" id="IPR046441">
    <property type="entry name" value="RdRp_CoV"/>
</dbReference>
<dbReference type="InterPro" id="IPR044347">
    <property type="entry name" value="RdRp_HCoV_HKU1-like"/>
</dbReference>
<dbReference type="InterPro" id="IPR009469">
    <property type="entry name" value="RdRp_N_CoV"/>
</dbReference>
<dbReference type="InterPro" id="IPR001205">
    <property type="entry name" value="RNA-dir_pol_C"/>
</dbReference>
<dbReference type="InterPro" id="IPR007094">
    <property type="entry name" value="RNA-dir_pol_PSvirus"/>
</dbReference>
<dbReference type="InterPro" id="IPR018995">
    <property type="entry name" value="RNA_synth_NSP10_CoV"/>
</dbReference>
<dbReference type="InterPro" id="IPR029063">
    <property type="entry name" value="SAM-dependent_MTases_sf"/>
</dbReference>
<dbReference type="PANTHER" id="PTHR43788">
    <property type="entry name" value="DNA2/NAM7 HELICASE FAMILY MEMBER"/>
    <property type="match status" value="1"/>
</dbReference>
<dbReference type="PANTHER" id="PTHR43788:SF16">
    <property type="entry name" value="HELICASE WITH ZINC FINGER 2"/>
    <property type="match status" value="1"/>
</dbReference>
<dbReference type="Pfam" id="PF13087">
    <property type="entry name" value="AAA_12"/>
    <property type="match status" value="1"/>
</dbReference>
<dbReference type="Pfam" id="PF13604">
    <property type="entry name" value="AAA_30"/>
    <property type="match status" value="1"/>
</dbReference>
<dbReference type="Pfam" id="PF11963">
    <property type="entry name" value="B-CoV_A_NSP1"/>
    <property type="match status" value="1"/>
</dbReference>
<dbReference type="Pfam" id="PF16251">
    <property type="entry name" value="bCoV_NAB"/>
    <property type="match status" value="1"/>
</dbReference>
<dbReference type="Pfam" id="PF06471">
    <property type="entry name" value="CoV_ExoN"/>
    <property type="match status" value="1"/>
</dbReference>
<dbReference type="Pfam" id="PF06460">
    <property type="entry name" value="CoV_Methyltr_2"/>
    <property type="match status" value="1"/>
</dbReference>
<dbReference type="Pfam" id="PF09401">
    <property type="entry name" value="CoV_NSP10"/>
    <property type="match status" value="1"/>
</dbReference>
<dbReference type="Pfam" id="PF20631">
    <property type="entry name" value="CoV_NSP13_1B"/>
    <property type="match status" value="1"/>
</dbReference>
<dbReference type="Pfam" id="PF20633">
    <property type="entry name" value="CoV_NSP13_stalk"/>
    <property type="match status" value="1"/>
</dbReference>
<dbReference type="Pfam" id="PF20632">
    <property type="entry name" value="CoV_NSP13_ZBD"/>
    <property type="match status" value="1"/>
</dbReference>
<dbReference type="Pfam" id="PF19215">
    <property type="entry name" value="CoV_NSP15_C"/>
    <property type="match status" value="1"/>
</dbReference>
<dbReference type="Pfam" id="PF19216">
    <property type="entry name" value="CoV_NSP15_M"/>
    <property type="match status" value="1"/>
</dbReference>
<dbReference type="Pfam" id="PF19219">
    <property type="entry name" value="CoV_NSP15_N"/>
    <property type="match status" value="1"/>
</dbReference>
<dbReference type="Pfam" id="PF19218">
    <property type="entry name" value="CoV_NSP3_C"/>
    <property type="match status" value="1"/>
</dbReference>
<dbReference type="Pfam" id="PF16348">
    <property type="entry name" value="CoV_NSP4_C"/>
    <property type="match status" value="1"/>
</dbReference>
<dbReference type="Pfam" id="PF19217">
    <property type="entry name" value="CoV_NSP4_N"/>
    <property type="match status" value="1"/>
</dbReference>
<dbReference type="Pfam" id="PF19213">
    <property type="entry name" value="CoV_NSP6"/>
    <property type="match status" value="1"/>
</dbReference>
<dbReference type="Pfam" id="PF08716">
    <property type="entry name" value="CoV_NSP7"/>
    <property type="match status" value="1"/>
</dbReference>
<dbReference type="Pfam" id="PF08717">
    <property type="entry name" value="CoV_NSP8"/>
    <property type="match status" value="1"/>
</dbReference>
<dbReference type="Pfam" id="PF08710">
    <property type="entry name" value="CoV_NSP9"/>
    <property type="match status" value="1"/>
</dbReference>
<dbReference type="Pfam" id="PF08715">
    <property type="entry name" value="CoV_peptidase"/>
    <property type="match status" value="1"/>
</dbReference>
<dbReference type="Pfam" id="PF06478">
    <property type="entry name" value="CoV_RPol_N"/>
    <property type="match status" value="1"/>
</dbReference>
<dbReference type="Pfam" id="PF01661">
    <property type="entry name" value="Macro"/>
    <property type="match status" value="1"/>
</dbReference>
<dbReference type="Pfam" id="PF22104">
    <property type="entry name" value="MHV_Nsp3_DPUP"/>
    <property type="match status" value="1"/>
</dbReference>
<dbReference type="Pfam" id="PF01831">
    <property type="entry name" value="Peptidase_C16"/>
    <property type="match status" value="1"/>
</dbReference>
<dbReference type="Pfam" id="PF05409">
    <property type="entry name" value="Peptidase_C30"/>
    <property type="match status" value="1"/>
</dbReference>
<dbReference type="Pfam" id="PF00680">
    <property type="entry name" value="RdRP_1"/>
    <property type="match status" value="1"/>
</dbReference>
<dbReference type="SMART" id="SM00506">
    <property type="entry name" value="A1pp"/>
    <property type="match status" value="1"/>
</dbReference>
<dbReference type="SUPFAM" id="SSF144246">
    <property type="entry name" value="Coronavirus NSP10-like"/>
    <property type="match status" value="1"/>
</dbReference>
<dbReference type="SUPFAM" id="SSF140367">
    <property type="entry name" value="Coronavirus NSP7-like"/>
    <property type="match status" value="1"/>
</dbReference>
<dbReference type="SUPFAM" id="SSF143076">
    <property type="entry name" value="Coronavirus NSP8-like"/>
    <property type="match status" value="1"/>
</dbReference>
<dbReference type="SUPFAM" id="SSF56672">
    <property type="entry name" value="DNA/RNA polymerases"/>
    <property type="match status" value="1"/>
</dbReference>
<dbReference type="SUPFAM" id="SSF142877">
    <property type="entry name" value="EndoU-like"/>
    <property type="match status" value="1"/>
</dbReference>
<dbReference type="SUPFAM" id="SSF52949">
    <property type="entry name" value="Macro domain-like"/>
    <property type="match status" value="1"/>
</dbReference>
<dbReference type="SUPFAM" id="SSF159936">
    <property type="entry name" value="NSP3A-like"/>
    <property type="match status" value="1"/>
</dbReference>
<dbReference type="SUPFAM" id="SSF52540">
    <property type="entry name" value="P-loop containing nucleoside triphosphate hydrolases"/>
    <property type="match status" value="1"/>
</dbReference>
<dbReference type="SUPFAM" id="SSF101816">
    <property type="entry name" value="Replicase NSP9"/>
    <property type="match status" value="1"/>
</dbReference>
<dbReference type="SUPFAM" id="SSF53335">
    <property type="entry name" value="S-adenosyl-L-methionine-dependent methyltransferases"/>
    <property type="match status" value="1"/>
</dbReference>
<dbReference type="SUPFAM" id="SSF50494">
    <property type="entry name" value="Trypsin-like serine proteases"/>
    <property type="match status" value="1"/>
</dbReference>
<dbReference type="PROSITE" id="PS51961">
    <property type="entry name" value="AV_NSP11N_COV_NSP15M"/>
    <property type="match status" value="1"/>
</dbReference>
<dbReference type="PROSITE" id="PS51963">
    <property type="entry name" value="BCOV_NSP1_C"/>
    <property type="match status" value="1"/>
</dbReference>
<dbReference type="PROSITE" id="PS51942">
    <property type="entry name" value="BCOV_NSP3C_C"/>
    <property type="match status" value="1"/>
</dbReference>
<dbReference type="PROSITE" id="PS51994">
    <property type="entry name" value="BCOV_NSP3E_G2M"/>
    <property type="match status" value="1"/>
</dbReference>
<dbReference type="PROSITE" id="PS51945">
    <property type="entry name" value="BCOV_NSP3E_NAB"/>
    <property type="match status" value="1"/>
</dbReference>
<dbReference type="PROSITE" id="PS51993">
    <property type="entry name" value="COV_3ECTO"/>
    <property type="match status" value="1"/>
</dbReference>
<dbReference type="PROSITE" id="PS51952">
    <property type="entry name" value="COV_EXON_MTASE_COACT"/>
    <property type="match status" value="1"/>
</dbReference>
<dbReference type="PROSITE" id="PS51954">
    <property type="entry name" value="COV_N7_MTASE"/>
    <property type="match status" value="1"/>
</dbReference>
<dbReference type="PROSITE" id="PS51962">
    <property type="entry name" value="COV_NSP1"/>
    <property type="match status" value="1"/>
</dbReference>
<dbReference type="PROSITE" id="PS52000">
    <property type="entry name" value="COV_NSP12_IF"/>
    <property type="match status" value="1"/>
</dbReference>
<dbReference type="PROSITE" id="PS51948">
    <property type="entry name" value="COV_NSP12_RDRP"/>
    <property type="match status" value="1"/>
</dbReference>
<dbReference type="PROSITE" id="PS51960">
    <property type="entry name" value="COV_NSP15_NTD"/>
    <property type="match status" value="1"/>
</dbReference>
<dbReference type="PROSITE" id="PS51991">
    <property type="entry name" value="COV_NSP2_C"/>
    <property type="match status" value="1"/>
</dbReference>
<dbReference type="PROSITE" id="PS51990">
    <property type="entry name" value="COV_NSP2_M"/>
    <property type="match status" value="1"/>
</dbReference>
<dbReference type="PROSITE" id="PS51989">
    <property type="entry name" value="COV_NSP2_N"/>
    <property type="match status" value="1"/>
</dbReference>
<dbReference type="PROSITE" id="PS51992">
    <property type="entry name" value="COV_NSP3_Y"/>
    <property type="match status" value="1"/>
</dbReference>
<dbReference type="PROSITE" id="PS51943">
    <property type="entry name" value="COV_NSP3A_UBL"/>
    <property type="match status" value="1"/>
</dbReference>
<dbReference type="PROSITE" id="PS51944">
    <property type="entry name" value="COV_NSP3D_UBL"/>
    <property type="match status" value="1"/>
</dbReference>
<dbReference type="PROSITE" id="PS51946">
    <property type="entry name" value="COV_NSP4C"/>
    <property type="match status" value="1"/>
</dbReference>
<dbReference type="PROSITE" id="PS51949">
    <property type="entry name" value="COV_NSP7"/>
    <property type="match status" value="1"/>
</dbReference>
<dbReference type="PROSITE" id="PS51950">
    <property type="entry name" value="COV_NSP8"/>
    <property type="match status" value="1"/>
</dbReference>
<dbReference type="PROSITE" id="PS51951">
    <property type="entry name" value="COV_NSP9_SSRNA_BD"/>
    <property type="match status" value="1"/>
</dbReference>
<dbReference type="PROSITE" id="PS51653">
    <property type="entry name" value="CV_ZBD"/>
    <property type="match status" value="1"/>
</dbReference>
<dbReference type="PROSITE" id="PS51442">
    <property type="entry name" value="M_PRO"/>
    <property type="match status" value="1"/>
</dbReference>
<dbReference type="PROSITE" id="PS51154">
    <property type="entry name" value="MACRO"/>
    <property type="match status" value="1"/>
</dbReference>
<dbReference type="PROSITE" id="PS51958">
    <property type="entry name" value="NENDOU"/>
    <property type="match status" value="1"/>
</dbReference>
<dbReference type="PROSITE" id="PS51947">
    <property type="entry name" value="NIRAN"/>
    <property type="match status" value="1"/>
</dbReference>
<dbReference type="PROSITE" id="PS51955">
    <property type="entry name" value="NIV_2_O_MTASE"/>
    <property type="match status" value="1"/>
</dbReference>
<dbReference type="PROSITE" id="PS51953">
    <property type="entry name" value="NIV_EXON"/>
    <property type="match status" value="1"/>
</dbReference>
<dbReference type="PROSITE" id="PS51124">
    <property type="entry name" value="PEPTIDASE_C16"/>
    <property type="match status" value="2"/>
</dbReference>
<dbReference type="PROSITE" id="PS51657">
    <property type="entry name" value="PSRV_HELICASE"/>
    <property type="match status" value="1"/>
</dbReference>
<dbReference type="PROSITE" id="PS50507">
    <property type="entry name" value="RDRP_SSRNA_POS"/>
    <property type="match status" value="1"/>
</dbReference>